<gene>
    <name evidence="37 42" type="primary">CARD9</name>
</gene>
<dbReference type="EMBL" id="AF311287">
    <property type="protein sequence ID" value="AAG28790.1"/>
    <property type="molecule type" value="mRNA"/>
</dbReference>
<dbReference type="EMBL" id="AK024001">
    <property type="protein sequence ID" value="BAB14766.1"/>
    <property type="molecule type" value="mRNA"/>
</dbReference>
<dbReference type="EMBL" id="AK292081">
    <property type="protein sequence ID" value="BAF84770.1"/>
    <property type="molecule type" value="mRNA"/>
</dbReference>
<dbReference type="EMBL" id="AL592301">
    <property type="status" value="NOT_ANNOTATED_CDS"/>
    <property type="molecule type" value="Genomic_DNA"/>
</dbReference>
<dbReference type="EMBL" id="CH471090">
    <property type="protein sequence ID" value="EAW88220.1"/>
    <property type="molecule type" value="Genomic_DNA"/>
</dbReference>
<dbReference type="EMBL" id="BC008877">
    <property type="protein sequence ID" value="AAH08877.1"/>
    <property type="molecule type" value="mRNA"/>
</dbReference>
<dbReference type="CCDS" id="CCDS48057.1">
    <molecule id="Q9H257-2"/>
</dbReference>
<dbReference type="CCDS" id="CCDS6997.1">
    <molecule id="Q9H257-1"/>
</dbReference>
<dbReference type="RefSeq" id="NP_434700.2">
    <molecule id="Q9H257-1"/>
    <property type="nucleotide sequence ID" value="NM_052813.4"/>
</dbReference>
<dbReference type="RefSeq" id="NP_434701.1">
    <molecule id="Q9H257-2"/>
    <property type="nucleotide sequence ID" value="NM_052814.4"/>
</dbReference>
<dbReference type="PDB" id="6E25">
    <property type="method" value="NMR"/>
    <property type="chains" value="A=1-97"/>
</dbReference>
<dbReference type="PDB" id="6E26">
    <property type="method" value="NMR"/>
    <property type="chains" value="A=1-97"/>
</dbReference>
<dbReference type="PDB" id="6E27">
    <property type="method" value="X-ray"/>
    <property type="resolution" value="1.81 A"/>
    <property type="chains" value="C/D=2-97"/>
</dbReference>
<dbReference type="PDB" id="6E28">
    <property type="method" value="X-ray"/>
    <property type="resolution" value="1.36 A"/>
    <property type="chains" value="C/D=2-97"/>
</dbReference>
<dbReference type="PDB" id="6N2M">
    <property type="method" value="NMR"/>
    <property type="chains" value="A/B=2-142"/>
</dbReference>
<dbReference type="PDB" id="6N2P">
    <property type="method" value="EM"/>
    <property type="resolution" value="4.00 A"/>
    <property type="chains" value="A/B/C/D/E/F/G/H/I/J=2-152"/>
</dbReference>
<dbReference type="PDB" id="9AVM">
    <property type="method" value="X-ray"/>
    <property type="resolution" value="1.79 A"/>
    <property type="chains" value="A/B/C/D=156-214"/>
</dbReference>
<dbReference type="PDB" id="9AVN">
    <property type="method" value="X-ray"/>
    <property type="resolution" value="2.73 A"/>
    <property type="chains" value="A/B/C/D/E/F/G/H=156-214"/>
</dbReference>
<dbReference type="PDBsum" id="6E25"/>
<dbReference type="PDBsum" id="6E26"/>
<dbReference type="PDBsum" id="6E27"/>
<dbReference type="PDBsum" id="6E28"/>
<dbReference type="PDBsum" id="6N2M"/>
<dbReference type="PDBsum" id="6N2P"/>
<dbReference type="PDBsum" id="9AVM"/>
<dbReference type="PDBsum" id="9AVN"/>
<dbReference type="EMDB" id="EMD-8976"/>
<dbReference type="EMDB" id="EMD-9332"/>
<dbReference type="SMR" id="Q9H257"/>
<dbReference type="BioGRID" id="122094">
    <property type="interactions" value="169"/>
</dbReference>
<dbReference type="ComplexPortal" id="CPX-8881">
    <property type="entry name" value="CARD-BCL10-MALT1 complex, CARD9 variant"/>
</dbReference>
<dbReference type="CORUM" id="Q9H257"/>
<dbReference type="FunCoup" id="Q9H257">
    <property type="interactions" value="448"/>
</dbReference>
<dbReference type="IntAct" id="Q9H257">
    <property type="interactions" value="172"/>
</dbReference>
<dbReference type="MINT" id="Q9H257"/>
<dbReference type="STRING" id="9606.ENSP00000360797"/>
<dbReference type="GlyGen" id="Q9H257">
    <property type="glycosylation" value="2 sites, 1 O-linked glycan (2 sites)"/>
</dbReference>
<dbReference type="iPTMnet" id="Q9H257"/>
<dbReference type="PhosphoSitePlus" id="Q9H257"/>
<dbReference type="BioMuta" id="CARD9"/>
<dbReference type="DMDM" id="143811370"/>
<dbReference type="jPOST" id="Q9H257"/>
<dbReference type="MassIVE" id="Q9H257"/>
<dbReference type="PaxDb" id="9606-ENSP00000360797"/>
<dbReference type="PeptideAtlas" id="Q9H257"/>
<dbReference type="ProteomicsDB" id="80503">
    <molecule id="Q9H257-1"/>
</dbReference>
<dbReference type="ProteomicsDB" id="80504">
    <molecule id="Q9H257-2"/>
</dbReference>
<dbReference type="ProteomicsDB" id="80505">
    <molecule id="Q9H257-3"/>
</dbReference>
<dbReference type="Pumba" id="Q9H257"/>
<dbReference type="Antibodypedia" id="18695">
    <property type="antibodies" value="277 antibodies from 40 providers"/>
</dbReference>
<dbReference type="DNASU" id="64170"/>
<dbReference type="Ensembl" id="ENST00000371732.10">
    <molecule id="Q9H257-1"/>
    <property type="protein sequence ID" value="ENSP00000360797.5"/>
    <property type="gene ID" value="ENSG00000187796.16"/>
</dbReference>
<dbReference type="Ensembl" id="ENST00000371734.7">
    <molecule id="Q9H257-2"/>
    <property type="protein sequence ID" value="ENSP00000360799.3"/>
    <property type="gene ID" value="ENSG00000187796.16"/>
</dbReference>
<dbReference type="Ensembl" id="ENST00000489932.2">
    <molecule id="Q9H257-3"/>
    <property type="protein sequence ID" value="ENSP00000451368.1"/>
    <property type="gene ID" value="ENSG00000187796.16"/>
</dbReference>
<dbReference type="GeneID" id="64170"/>
<dbReference type="KEGG" id="hsa:64170"/>
<dbReference type="MANE-Select" id="ENST00000371732.10">
    <property type="protein sequence ID" value="ENSP00000360797.5"/>
    <property type="RefSeq nucleotide sequence ID" value="NM_052813.5"/>
    <property type="RefSeq protein sequence ID" value="NP_434700.2"/>
</dbReference>
<dbReference type="UCSC" id="uc004chg.4">
    <molecule id="Q9H257-1"/>
    <property type="organism name" value="human"/>
</dbReference>
<dbReference type="AGR" id="HGNC:16391"/>
<dbReference type="CTD" id="64170"/>
<dbReference type="DisGeNET" id="64170"/>
<dbReference type="GeneCards" id="CARD9"/>
<dbReference type="HGNC" id="HGNC:16391">
    <property type="gene designation" value="CARD9"/>
</dbReference>
<dbReference type="HPA" id="ENSG00000187796">
    <property type="expression patterns" value="Tissue enhanced (bone marrow, lymphoid tissue)"/>
</dbReference>
<dbReference type="MalaCards" id="CARD9"/>
<dbReference type="MIM" id="212050">
    <property type="type" value="phenotype"/>
</dbReference>
<dbReference type="MIM" id="607212">
    <property type="type" value="gene"/>
</dbReference>
<dbReference type="neXtProt" id="NX_Q9H257"/>
<dbReference type="OpenTargets" id="ENSG00000187796"/>
<dbReference type="Orphanet" id="457088">
    <property type="disease" value="Predisposition to invasive fungal disease due to CARD9 deficiency"/>
</dbReference>
<dbReference type="PharmGKB" id="PA26077"/>
<dbReference type="VEuPathDB" id="HostDB:ENSG00000187796"/>
<dbReference type="eggNOG" id="ENOG502R00K">
    <property type="taxonomic scope" value="Eukaryota"/>
</dbReference>
<dbReference type="GeneTree" id="ENSGT00940000160570"/>
<dbReference type="HOGENOM" id="CLU_038057_1_0_1"/>
<dbReference type="InParanoid" id="Q9H257"/>
<dbReference type="OMA" id="HEVDWEN"/>
<dbReference type="OrthoDB" id="8868836at2759"/>
<dbReference type="PAN-GO" id="Q9H257">
    <property type="GO annotations" value="3 GO annotations based on evolutionary models"/>
</dbReference>
<dbReference type="PhylomeDB" id="Q9H257"/>
<dbReference type="TreeFam" id="TF351139"/>
<dbReference type="PathwayCommons" id="Q9H257"/>
<dbReference type="Reactome" id="R-HSA-168638">
    <property type="pathway name" value="NOD1/2 Signaling Pathway"/>
</dbReference>
<dbReference type="Reactome" id="R-HSA-5607764">
    <property type="pathway name" value="CLEC7A (Dectin-1) signaling"/>
</dbReference>
<dbReference type="SignaLink" id="Q9H257"/>
<dbReference type="SIGNOR" id="Q9H257"/>
<dbReference type="BioGRID-ORCS" id="64170">
    <property type="hits" value="30 hits in 1151 CRISPR screens"/>
</dbReference>
<dbReference type="GeneWiki" id="CARD9"/>
<dbReference type="GenomeRNAi" id="64170"/>
<dbReference type="Pharos" id="Q9H257">
    <property type="development level" value="Tbio"/>
</dbReference>
<dbReference type="PRO" id="PR:Q9H257"/>
<dbReference type="Proteomes" id="UP000005640">
    <property type="component" value="Chromosome 9"/>
</dbReference>
<dbReference type="RNAct" id="Q9H257">
    <property type="molecule type" value="protein"/>
</dbReference>
<dbReference type="Bgee" id="ENSG00000187796">
    <property type="expression patterns" value="Expressed in monocyte and 103 other cell types or tissues"/>
</dbReference>
<dbReference type="ExpressionAtlas" id="Q9H257">
    <property type="expression patterns" value="baseline and differential"/>
</dbReference>
<dbReference type="GO" id="GO:0032449">
    <property type="term" value="C:CBM complex"/>
    <property type="evidence" value="ECO:0000318"/>
    <property type="project" value="GO_Central"/>
</dbReference>
<dbReference type="GO" id="GO:0005737">
    <property type="term" value="C:cytoplasm"/>
    <property type="evidence" value="ECO:0000314"/>
    <property type="project" value="UniProtKB"/>
</dbReference>
<dbReference type="GO" id="GO:0005829">
    <property type="term" value="C:cytosol"/>
    <property type="evidence" value="ECO:0000304"/>
    <property type="project" value="Reactome"/>
</dbReference>
<dbReference type="GO" id="GO:0005886">
    <property type="term" value="C:plasma membrane"/>
    <property type="evidence" value="ECO:0000304"/>
    <property type="project" value="Reactome"/>
</dbReference>
<dbReference type="GO" id="GO:0032991">
    <property type="term" value="C:protein-containing complex"/>
    <property type="evidence" value="ECO:0000314"/>
    <property type="project" value="ARUK-UCL"/>
</dbReference>
<dbReference type="GO" id="GO:0050700">
    <property type="term" value="F:CARD domain binding"/>
    <property type="evidence" value="ECO:0000353"/>
    <property type="project" value="UniProtKB"/>
</dbReference>
<dbReference type="GO" id="GO:0042802">
    <property type="term" value="F:identical protein binding"/>
    <property type="evidence" value="ECO:0000353"/>
    <property type="project" value="IntAct"/>
</dbReference>
<dbReference type="GO" id="GO:0046872">
    <property type="term" value="F:metal ion binding"/>
    <property type="evidence" value="ECO:0007669"/>
    <property type="project" value="UniProtKB-KW"/>
</dbReference>
<dbReference type="GO" id="GO:0042803">
    <property type="term" value="F:protein homodimerization activity"/>
    <property type="evidence" value="ECO:0000353"/>
    <property type="project" value="UniProtKB"/>
</dbReference>
<dbReference type="GO" id="GO:0035591">
    <property type="term" value="F:signaling adaptor activity"/>
    <property type="evidence" value="ECO:0000314"/>
    <property type="project" value="UniProt"/>
</dbReference>
<dbReference type="GO" id="GO:0061760">
    <property type="term" value="P:antifungal innate immune response"/>
    <property type="evidence" value="ECO:0000314"/>
    <property type="project" value="UniProtKB"/>
</dbReference>
<dbReference type="GO" id="GO:0097190">
    <property type="term" value="P:apoptotic signaling pathway"/>
    <property type="evidence" value="ECO:0000315"/>
    <property type="project" value="ARUK-UCL"/>
</dbReference>
<dbReference type="GO" id="GO:0050830">
    <property type="term" value="P:defense response to Gram-positive bacterium"/>
    <property type="evidence" value="ECO:0007669"/>
    <property type="project" value="Ensembl"/>
</dbReference>
<dbReference type="GO" id="GO:0051607">
    <property type="term" value="P:defense response to virus"/>
    <property type="evidence" value="ECO:0007669"/>
    <property type="project" value="Ensembl"/>
</dbReference>
<dbReference type="GO" id="GO:0048874">
    <property type="term" value="P:host-mediated regulation of intestinal microbiota composition"/>
    <property type="evidence" value="ECO:0000315"/>
    <property type="project" value="UniProtKB"/>
</dbReference>
<dbReference type="GO" id="GO:0016064">
    <property type="term" value="P:immunoglobulin mediated immune response"/>
    <property type="evidence" value="ECO:0000315"/>
    <property type="project" value="UniProtKB"/>
</dbReference>
<dbReference type="GO" id="GO:0007254">
    <property type="term" value="P:JNK cascade"/>
    <property type="evidence" value="ECO:0007669"/>
    <property type="project" value="Ensembl"/>
</dbReference>
<dbReference type="GO" id="GO:0002446">
    <property type="term" value="P:neutrophil mediated immunity"/>
    <property type="evidence" value="ECO:0000315"/>
    <property type="project" value="UniProtKB"/>
</dbReference>
<dbReference type="GO" id="GO:0043123">
    <property type="term" value="P:positive regulation of canonical NF-kappaB signal transduction"/>
    <property type="evidence" value="ECO:0000314"/>
    <property type="project" value="UniProt"/>
</dbReference>
<dbReference type="GO" id="GO:0032722">
    <property type="term" value="P:positive regulation of chemokine production"/>
    <property type="evidence" value="ECO:0007669"/>
    <property type="project" value="Ensembl"/>
</dbReference>
<dbReference type="GO" id="GO:0001819">
    <property type="term" value="P:positive regulation of cytokine production"/>
    <property type="evidence" value="ECO:0000315"/>
    <property type="project" value="UniProtKB"/>
</dbReference>
<dbReference type="GO" id="GO:1900017">
    <property type="term" value="P:positive regulation of cytokine production involved in inflammatory response"/>
    <property type="evidence" value="ECO:0000250"/>
    <property type="project" value="UniProtKB"/>
</dbReference>
<dbReference type="GO" id="GO:0070374">
    <property type="term" value="P:positive regulation of ERK1 and ERK2 cascade"/>
    <property type="evidence" value="ECO:0000250"/>
    <property type="project" value="UniProtKB"/>
</dbReference>
<dbReference type="GO" id="GO:0032725">
    <property type="term" value="P:positive regulation of granulocyte macrophage colony-stimulating factor production"/>
    <property type="evidence" value="ECO:0000315"/>
    <property type="project" value="UniProtKB"/>
</dbReference>
<dbReference type="GO" id="GO:0045089">
    <property type="term" value="P:positive regulation of innate immune response"/>
    <property type="evidence" value="ECO:0007669"/>
    <property type="project" value="Ensembl"/>
</dbReference>
<dbReference type="GO" id="GO:0032740">
    <property type="term" value="P:positive regulation of interleukin-17 production"/>
    <property type="evidence" value="ECO:0000315"/>
    <property type="project" value="UniProtKB"/>
</dbReference>
<dbReference type="GO" id="GO:0032755">
    <property type="term" value="P:positive regulation of interleukin-6 production"/>
    <property type="evidence" value="ECO:0000315"/>
    <property type="project" value="UniProtKB"/>
</dbReference>
<dbReference type="GO" id="GO:0046330">
    <property type="term" value="P:positive regulation of JNK cascade"/>
    <property type="evidence" value="ECO:0000314"/>
    <property type="project" value="MGI"/>
</dbReference>
<dbReference type="GO" id="GO:0060907">
    <property type="term" value="P:positive regulation of macrophage cytokine production"/>
    <property type="evidence" value="ECO:0007669"/>
    <property type="project" value="Ensembl"/>
</dbReference>
<dbReference type="GO" id="GO:0051092">
    <property type="term" value="P:positive regulation of NF-kappaB transcription factor activity"/>
    <property type="evidence" value="ECO:0000314"/>
    <property type="project" value="UniProtKB"/>
</dbReference>
<dbReference type="GO" id="GO:0032874">
    <property type="term" value="P:positive regulation of stress-activated MAPK cascade"/>
    <property type="evidence" value="ECO:0000314"/>
    <property type="project" value="MGI"/>
</dbReference>
<dbReference type="GO" id="GO:2000318">
    <property type="term" value="P:positive regulation of T-helper 17 type immune response"/>
    <property type="evidence" value="ECO:0000315"/>
    <property type="project" value="UniProtKB"/>
</dbReference>
<dbReference type="GO" id="GO:0032760">
    <property type="term" value="P:positive regulation of tumor necrosis factor production"/>
    <property type="evidence" value="ECO:0007669"/>
    <property type="project" value="Ensembl"/>
</dbReference>
<dbReference type="GO" id="GO:0051260">
    <property type="term" value="P:protein homooligomerization"/>
    <property type="evidence" value="ECO:0000314"/>
    <property type="project" value="UniProtKB"/>
</dbReference>
<dbReference type="GO" id="GO:0042981">
    <property type="term" value="P:regulation of apoptotic process"/>
    <property type="evidence" value="ECO:0007669"/>
    <property type="project" value="InterPro"/>
</dbReference>
<dbReference type="GO" id="GO:0050776">
    <property type="term" value="P:regulation of immune response"/>
    <property type="evidence" value="ECO:0000318"/>
    <property type="project" value="GO_Central"/>
</dbReference>
<dbReference type="GO" id="GO:0032663">
    <property type="term" value="P:regulation of interleukin-2 production"/>
    <property type="evidence" value="ECO:0007669"/>
    <property type="project" value="Ensembl"/>
</dbReference>
<dbReference type="GO" id="GO:1904044">
    <property type="term" value="P:response to aldosterone"/>
    <property type="evidence" value="ECO:0007669"/>
    <property type="project" value="Ensembl"/>
</dbReference>
<dbReference type="GO" id="GO:0043330">
    <property type="term" value="P:response to exogenous dsRNA"/>
    <property type="evidence" value="ECO:0007669"/>
    <property type="project" value="Ensembl"/>
</dbReference>
<dbReference type="GO" id="GO:0032495">
    <property type="term" value="P:response to muramyl dipeptide"/>
    <property type="evidence" value="ECO:0007669"/>
    <property type="project" value="Ensembl"/>
</dbReference>
<dbReference type="GO" id="GO:0032494">
    <property type="term" value="P:response to peptidoglycan"/>
    <property type="evidence" value="ECO:0007669"/>
    <property type="project" value="Ensembl"/>
</dbReference>
<dbReference type="GO" id="GO:0009410">
    <property type="term" value="P:response to xenobiotic stimulus"/>
    <property type="evidence" value="ECO:0007669"/>
    <property type="project" value="Ensembl"/>
</dbReference>
<dbReference type="GO" id="GO:0051403">
    <property type="term" value="P:stress-activated MAPK cascade"/>
    <property type="evidence" value="ECO:0007669"/>
    <property type="project" value="Ensembl"/>
</dbReference>
<dbReference type="CDD" id="cd08809">
    <property type="entry name" value="CARD_CARD9"/>
    <property type="match status" value="1"/>
</dbReference>
<dbReference type="FunFam" id="1.10.533.10:FF:000003">
    <property type="entry name" value="Caspase recruitment domain family, member 11"/>
    <property type="match status" value="1"/>
</dbReference>
<dbReference type="Gene3D" id="1.10.533.10">
    <property type="entry name" value="Death Domain, Fas"/>
    <property type="match status" value="1"/>
</dbReference>
<dbReference type="InterPro" id="IPR001315">
    <property type="entry name" value="CARD"/>
</dbReference>
<dbReference type="InterPro" id="IPR042142">
    <property type="entry name" value="CARD_CARD9"/>
</dbReference>
<dbReference type="InterPro" id="IPR011029">
    <property type="entry name" value="DEATH-like_dom_sf"/>
</dbReference>
<dbReference type="PANTHER" id="PTHR14559">
    <property type="entry name" value="CASPASE RECRUITMENT DOMAIN FAMILY"/>
    <property type="match status" value="1"/>
</dbReference>
<dbReference type="PANTHER" id="PTHR14559:SF3">
    <property type="entry name" value="CASPASE RECRUITMENT DOMAIN-CONTAINING PROTEIN 9"/>
    <property type="match status" value="1"/>
</dbReference>
<dbReference type="Pfam" id="PF00619">
    <property type="entry name" value="CARD"/>
    <property type="match status" value="1"/>
</dbReference>
<dbReference type="SUPFAM" id="SSF47986">
    <property type="entry name" value="DEATH domain"/>
    <property type="match status" value="1"/>
</dbReference>
<dbReference type="PROSITE" id="PS50209">
    <property type="entry name" value="CARD"/>
    <property type="match status" value="1"/>
</dbReference>
<feature type="chain" id="PRO_0000144082" description="Caspase recruitment domain-containing protein 9">
    <location>
        <begin position="1"/>
        <end position="536"/>
    </location>
</feature>
<feature type="domain" description="CARD" evidence="4">
    <location>
        <begin position="6"/>
        <end position="98"/>
    </location>
</feature>
<feature type="region of interest" description="Linker" evidence="40">
    <location>
        <begin position="99"/>
        <end position="116"/>
    </location>
</feature>
<feature type="region of interest" description="Disordered" evidence="5">
    <location>
        <begin position="427"/>
        <end position="536"/>
    </location>
</feature>
<feature type="coiled-coil region" evidence="3">
    <location>
        <begin position="117"/>
        <end position="277"/>
    </location>
</feature>
<feature type="coiled-coil region" evidence="3">
    <location>
        <begin position="332"/>
        <end position="419"/>
    </location>
</feature>
<feature type="compositionally biased region" description="Basic and acidic residues" evidence="5">
    <location>
        <begin position="487"/>
        <end position="502"/>
    </location>
</feature>
<feature type="compositionally biased region" description="Basic residues" evidence="5">
    <location>
        <begin position="503"/>
        <end position="513"/>
    </location>
</feature>
<feature type="binding site" evidence="32 47">
    <location>
        <position position="3"/>
    </location>
    <ligand>
        <name>Zn(2+)</name>
        <dbReference type="ChEBI" id="CHEBI:29105"/>
    </ligand>
</feature>
<feature type="binding site" evidence="31 32 45 47">
    <location>
        <position position="10"/>
    </location>
    <ligand>
        <name>Zn(2+)</name>
        <dbReference type="ChEBI" id="CHEBI:29105"/>
    </ligand>
</feature>
<feature type="binding site" evidence="31 32 45 47">
    <location>
        <position position="73"/>
    </location>
    <ligand>
        <name>Zn(2+)</name>
        <dbReference type="ChEBI" id="CHEBI:29105"/>
    </ligand>
</feature>
<feature type="modified residue" description="Phosphoserine" evidence="2">
    <location>
        <position position="2"/>
    </location>
</feature>
<feature type="modified residue" description="Phosphothreonine" evidence="1">
    <location>
        <position position="231"/>
    </location>
</feature>
<feature type="modified residue" description="Phosphoserine" evidence="50">
    <location>
        <position position="277"/>
    </location>
</feature>
<feature type="modified residue" description="Phosphoserine" evidence="2">
    <location>
        <position position="424"/>
    </location>
</feature>
<feature type="modified residue" description="Phosphoserine" evidence="50">
    <location>
        <position position="425"/>
    </location>
</feature>
<feature type="modified residue" description="Phosphoserine" evidence="1">
    <location>
        <position position="431"/>
    </location>
</feature>
<feature type="modified residue" description="Phosphoserine" evidence="2">
    <location>
        <position position="450"/>
    </location>
</feature>
<feature type="modified residue" description="Phosphoserine" evidence="49">
    <location>
        <position position="460"/>
    </location>
</feature>
<feature type="modified residue" description="Phosphoserine" evidence="50">
    <location>
        <position position="483"/>
    </location>
</feature>
<feature type="modified residue" description="Phosphoserine" evidence="50">
    <location>
        <position position="498"/>
    </location>
</feature>
<feature type="modified residue" description="Phosphothreonine; by CK2" evidence="2">
    <location>
        <position position="531"/>
    </location>
</feature>
<feature type="modified residue" description="Phosphothreonine; by CK2" evidence="2">
    <location>
        <position position="533"/>
    </location>
</feature>
<feature type="cross-link" description="Glycyl lysine isopeptide (Lys-Gly) (interchain with G-Cter in ubiquitin)" evidence="20 32 34">
    <location>
        <position position="125"/>
    </location>
</feature>
<feature type="splice variant" id="VSP_024390" description="In isoform 3." evidence="38">
    <original>AIATREE</original>
    <variation>STQMEGL</variation>
    <location>
        <begin position="360"/>
        <end position="366"/>
    </location>
</feature>
<feature type="splice variant" id="VSP_024391" description="In isoform 3." evidence="38">
    <location>
        <begin position="367"/>
        <end position="536"/>
    </location>
</feature>
<feature type="splice variant" id="VSP_024392" description="In isoform 2." evidence="39">
    <original>LSSGEPPEKER</original>
    <variation>PAGLPGIGAVC</variation>
    <location>
        <begin position="482"/>
        <end position="492"/>
    </location>
</feature>
<feature type="splice variant" id="VSP_024393" description="In isoform 2." evidence="39">
    <location>
        <begin position="493"/>
        <end position="536"/>
    </location>
</feature>
<feature type="sequence variant" id="VAR_048607" description="In dbSNP:rs4077515." evidence="6 7">
    <original>S</original>
    <variation>N</variation>
    <location>
        <position position="12"/>
    </location>
</feature>
<feature type="sequence variant" id="VAR_084630" description="In IMD103; reduced cytokine production in response to C.albicans infection; impaired NF-kappa-B transcriptional activity; dbSNP:rs1159160299." evidence="14">
    <original>R</original>
    <variation>W</variation>
    <location>
        <position position="18"/>
    </location>
</feature>
<feature type="sequence variant" id="VAR_084631" description="In IMD103; reduced cytokine production in response to C.albicans infection; impaired NF-kappa-B transcriptional activity." evidence="29">
    <location>
        <begin position="23"/>
        <end position="536"/>
    </location>
</feature>
<feature type="sequence variant" id="VAR_084632" description="In IMD103; abolished homooligomerization and formation of BCL10-nucleating filaments; reduced cytokine production in response to C.albicans infection; reduced production IgG antibodies in response to C.albicans infection; dbSNP:rs1454037218." evidence="16 32 35">
    <original>R</original>
    <variation>Q</variation>
    <location>
        <position position="35"/>
    </location>
</feature>
<feature type="sequence variant" id="VAR_084633" description="In IMD103; reduced cytokine production in response to C.albicans infection; dbSNP:rs940550122." evidence="23">
    <original>R</original>
    <variation>H</variation>
    <location>
        <position position="57"/>
    </location>
</feature>
<feature type="sequence variant" id="VAR_084634" description="In IMD103; reduced cytokine production in response to C.albicans infection; impaired NF-kappa-B transcriptional activity; reduced production IgG antibodies in response to C.albicans infection; dbSNP:rs767522068." evidence="16 25 35 36">
    <original>R</original>
    <variation>W</variation>
    <location>
        <position position="70"/>
    </location>
</feature>
<feature type="sequence variant" id="VAR_070828" description="In IMD103; dbSNP:rs398122362." evidence="9">
    <original>G</original>
    <variation>S</variation>
    <location>
        <position position="72"/>
    </location>
</feature>
<feature type="sequence variant" id="VAR_084635" description="In IMD103; does not affect formation of the CBM complex but impairs formation of a complex with RASGRF1; dbSNP:rs921151054." evidence="12 21 33">
    <original>Y</original>
    <variation>H</variation>
    <location>
        <position position="91"/>
    </location>
</feature>
<feature type="sequence variant" id="VAR_070829" description="In IMD103; dbSNP:rs398122364." evidence="10">
    <original>R</original>
    <variation>C</variation>
    <location>
        <position position="101"/>
    </location>
</feature>
<feature type="sequence variant" id="VAR_084636" description="In IMD103." evidence="18">
    <original>R</original>
    <variation>L</variation>
    <location>
        <position position="101"/>
    </location>
</feature>
<feature type="sequence variant" id="VAR_084637" description="In IMD103; decreased production of cytokines in CD4(+) Th17 cells." evidence="11">
    <location>
        <begin position="158"/>
        <end position="536"/>
    </location>
</feature>
<feature type="sequence variant" id="VAR_084638" description="In IMD103; reduced cytokine production in response to C.albicans infection; does not affect NF-kappa-B transcriptional activity; dbSNP:rs768281299." evidence="36">
    <original>K</original>
    <variation>E</variation>
    <location>
        <position position="196"/>
    </location>
</feature>
<feature type="sequence variant" id="VAR_084639" description="In IMD103; reduced production IgG antibodies in response to C.albicans infection." evidence="10 15 16 27 35">
    <location>
        <begin position="289"/>
        <end position="536"/>
    </location>
</feature>
<feature type="sequence variant" id="VAR_084640" description="In IMD103; reduced cytokine production in response to C.albicans infection." evidence="8 16 17 22 26 30">
    <location>
        <begin position="295"/>
        <end position="536"/>
    </location>
</feature>
<feature type="sequence variant" id="VAR_084641" description="In IMD103; dbSNP:rs775284320." evidence="14">
    <location>
        <position position="323"/>
    </location>
</feature>
<feature type="sequence variant" id="VAR_070830" description="In IMD103; reduced cytokine production in response to C.albicans infection; does not affect NF-kappa-B transcriptional activity; dbSNP:rs149712114." evidence="9 36">
    <original>R</original>
    <variation>P</variation>
    <location>
        <position position="373"/>
    </location>
</feature>
<feature type="sequence variant" id="VAR_084642" description="In IMD103." evidence="24">
    <original>A</original>
    <variation>P</variation>
    <location>
        <position position="380"/>
    </location>
</feature>
<feature type="mutagenesis site" description="Strongly reduced zinc-binding." evidence="31">
    <original>C</original>
    <variation>A</variation>
    <location>
        <position position="10"/>
    </location>
</feature>
<feature type="mutagenesis site" description="Abolished homooligomerization and formation of BCL10-nucleating filaments." evidence="32">
    <original>E</original>
    <variation>R</variation>
    <location>
        <position position="15"/>
    </location>
</feature>
<feature type="mutagenesis site" description="Abolished homooligomerization and formation of BCL10-nucleating filaments." evidence="32">
    <original>R</original>
    <variation>E</variation>
    <location>
        <position position="35"/>
    </location>
</feature>
<feature type="mutagenesis site" description="Does not affect zinc-binbing." evidence="31">
    <original>C</original>
    <variation>A</variation>
    <location>
        <position position="37"/>
    </location>
</feature>
<feature type="mutagenesis site" description="Abolished homooligomerization and formation of BCL10-nucleating filaments." evidence="32">
    <original>D</original>
    <variation>R</variation>
    <location>
        <position position="43"/>
    </location>
</feature>
<feature type="mutagenesis site" description="Abolished homooligomerization and formation of BCL10-nucleating filaments." evidence="32">
    <original>K</original>
    <variation>D</variation>
    <location>
        <position position="58"/>
    </location>
</feature>
<feature type="mutagenesis site" description="Abolished homooligomerization and formation of BCL10-nucleating filaments." evidence="32">
    <original>D</original>
    <variation>R</variation>
    <location>
        <position position="66"/>
    </location>
</feature>
<feature type="mutagenesis site" description="Strongly reduced zinc-binding." evidence="31">
    <original>H</original>
    <variation>A</variation>
    <location>
        <position position="73"/>
    </location>
</feature>
<feature type="mutagenesis site" description="Disruption of the linker region, relieving autoinhibition and leading to activation of NF-kappa-B." evidence="32">
    <original>R</original>
    <variation>Q</variation>
    <location>
        <position position="101"/>
    </location>
</feature>
<feature type="mutagenesis site" description="Disruption of the linker region, relieving autoinhibition and leading to activation of NF-kappa-B." evidence="32">
    <original>F</original>
    <variation>L</variation>
    <location>
        <position position="103"/>
    </location>
</feature>
<feature type="mutagenesis site" description="Disruption of the linker region, relieving autoinhibition and leading to activation of NF-kappa-B. Constitutively forms BCL10-nucleating filaments." evidence="32">
    <original>I</original>
    <variation>E</variation>
    <location>
        <position position="107"/>
    </location>
</feature>
<feature type="mutagenesis site" description="Disruption of the linker region, relieving autoinhibition and leading to activation of NF-kappa-B." evidence="32">
    <original>G</original>
    <variation>S</variation>
    <location>
        <position position="111"/>
    </location>
</feature>
<feature type="mutagenesis site" description="Disruption of the linker region, relieving autoinhibition and leading to activation of NF-kappa-B." evidence="32">
    <original>G</original>
    <variation>D</variation>
    <location>
        <position position="114"/>
    </location>
</feature>
<feature type="mutagenesis site" description="Disruption of the linker region, relieving autoinhibition and leading to activation of NF-kappa-B. Constitutively forms BCL10-nucleating filaments." evidence="32">
    <original>L</original>
    <variation>I</variation>
    <location>
        <position position="115"/>
    </location>
</feature>
<feature type="mutagenesis site" description="Reduced cytokine production in response to C.albicans infection. Impaired NF-kappa-B transcriptional activity. Does not affect interaction with BCL10." evidence="20">
    <original>K</original>
    <variation>R</variation>
    <location>
        <position position="125"/>
    </location>
</feature>
<feature type="turn" evidence="51">
    <location>
        <begin position="7"/>
        <end position="9"/>
    </location>
</feature>
<feature type="helix" evidence="51">
    <location>
        <begin position="10"/>
        <end position="14"/>
    </location>
</feature>
<feature type="helix" evidence="51">
    <location>
        <begin position="15"/>
        <end position="17"/>
    </location>
</feature>
<feature type="helix" evidence="51">
    <location>
        <begin position="18"/>
        <end position="24"/>
    </location>
</feature>
<feature type="helix" evidence="51">
    <location>
        <begin position="27"/>
        <end position="29"/>
    </location>
</feature>
<feature type="helix" evidence="51">
    <location>
        <begin position="31"/>
        <end position="36"/>
    </location>
</feature>
<feature type="helix" evidence="51">
    <location>
        <begin position="42"/>
        <end position="49"/>
    </location>
</feature>
<feature type="helix" evidence="51">
    <location>
        <begin position="54"/>
        <end position="69"/>
    </location>
</feature>
<feature type="turn" evidence="51">
    <location>
        <begin position="70"/>
        <end position="72"/>
    </location>
</feature>
<feature type="helix" evidence="51">
    <location>
        <begin position="73"/>
        <end position="86"/>
    </location>
</feature>
<feature type="helix" evidence="51">
    <location>
        <begin position="88"/>
        <end position="95"/>
    </location>
</feature>
<feature type="strand" evidence="52">
    <location>
        <begin position="96"/>
        <end position="98"/>
    </location>
</feature>
<feature type="helix" evidence="52">
    <location>
        <begin position="104"/>
        <end position="110"/>
    </location>
</feature>
<feature type="helix" evidence="52">
    <location>
        <begin position="112"/>
        <end position="138"/>
    </location>
</feature>
<proteinExistence type="evidence at protein level"/>
<evidence type="ECO:0000250" key="1">
    <source>
        <dbReference type="UniProtKB" id="A2AIV8"/>
    </source>
</evidence>
<evidence type="ECO:0000250" key="2">
    <source>
        <dbReference type="UniProtKB" id="Q9EPY0"/>
    </source>
</evidence>
<evidence type="ECO:0000255" key="3"/>
<evidence type="ECO:0000255" key="4">
    <source>
        <dbReference type="PROSITE-ProRule" id="PRU00046"/>
    </source>
</evidence>
<evidence type="ECO:0000256" key="5">
    <source>
        <dbReference type="SAM" id="MobiDB-lite"/>
    </source>
</evidence>
<evidence type="ECO:0000269" key="6">
    <source>
    </source>
</evidence>
<evidence type="ECO:0000269" key="7">
    <source>
    </source>
</evidence>
<evidence type="ECO:0000269" key="8">
    <source>
    </source>
</evidence>
<evidence type="ECO:0000269" key="9">
    <source>
    </source>
</evidence>
<evidence type="ECO:0000269" key="10">
    <source>
    </source>
</evidence>
<evidence type="ECO:0000269" key="11">
    <source>
    </source>
</evidence>
<evidence type="ECO:0000269" key="12">
    <source>
    </source>
</evidence>
<evidence type="ECO:0000269" key="13">
    <source>
    </source>
</evidence>
<evidence type="ECO:0000269" key="14">
    <source>
    </source>
</evidence>
<evidence type="ECO:0000269" key="15">
    <source>
    </source>
</evidence>
<evidence type="ECO:0000269" key="16">
    <source>
    </source>
</evidence>
<evidence type="ECO:0000269" key="17">
    <source>
    </source>
</evidence>
<evidence type="ECO:0000269" key="18">
    <source>
    </source>
</evidence>
<evidence type="ECO:0000269" key="19">
    <source>
    </source>
</evidence>
<evidence type="ECO:0000269" key="20">
    <source>
    </source>
</evidence>
<evidence type="ECO:0000269" key="21">
    <source>
    </source>
</evidence>
<evidence type="ECO:0000269" key="22">
    <source>
    </source>
</evidence>
<evidence type="ECO:0000269" key="23">
    <source>
    </source>
</evidence>
<evidence type="ECO:0000269" key="24">
    <source>
    </source>
</evidence>
<evidence type="ECO:0000269" key="25">
    <source>
    </source>
</evidence>
<evidence type="ECO:0000269" key="26">
    <source>
    </source>
</evidence>
<evidence type="ECO:0000269" key="27">
    <source>
    </source>
</evidence>
<evidence type="ECO:0000269" key="28">
    <source>
    </source>
</evidence>
<evidence type="ECO:0000269" key="29">
    <source>
    </source>
</evidence>
<evidence type="ECO:0000269" key="30">
    <source>
    </source>
</evidence>
<evidence type="ECO:0000269" key="31">
    <source>
    </source>
</evidence>
<evidence type="ECO:0000269" key="32">
    <source>
    </source>
</evidence>
<evidence type="ECO:0000269" key="33">
    <source>
    </source>
</evidence>
<evidence type="ECO:0000269" key="34">
    <source>
    </source>
</evidence>
<evidence type="ECO:0000269" key="35">
    <source>
    </source>
</evidence>
<evidence type="ECO:0000269" key="36">
    <source>
    </source>
</evidence>
<evidence type="ECO:0000303" key="37">
    <source>
    </source>
</evidence>
<evidence type="ECO:0000303" key="38">
    <source>
    </source>
</evidence>
<evidence type="ECO:0000303" key="39">
    <source>
    </source>
</evidence>
<evidence type="ECO:0000303" key="40">
    <source>
    </source>
</evidence>
<evidence type="ECO:0000305" key="41"/>
<evidence type="ECO:0000312" key="42">
    <source>
        <dbReference type="HGNC" id="HGNC:16391"/>
    </source>
</evidence>
<evidence type="ECO:0007744" key="43">
    <source>
        <dbReference type="PDB" id="6E25"/>
    </source>
</evidence>
<evidence type="ECO:0007744" key="44">
    <source>
        <dbReference type="PDB" id="6E26"/>
    </source>
</evidence>
<evidence type="ECO:0007744" key="45">
    <source>
        <dbReference type="PDB" id="6E27"/>
    </source>
</evidence>
<evidence type="ECO:0007744" key="46">
    <source>
        <dbReference type="PDB" id="6E28"/>
    </source>
</evidence>
<evidence type="ECO:0007744" key="47">
    <source>
        <dbReference type="PDB" id="6N2M"/>
    </source>
</evidence>
<evidence type="ECO:0007744" key="48">
    <source>
        <dbReference type="PDB" id="6N2P"/>
    </source>
</evidence>
<evidence type="ECO:0007744" key="49">
    <source>
    </source>
</evidence>
<evidence type="ECO:0007744" key="50">
    <source>
    </source>
</evidence>
<evidence type="ECO:0007829" key="51">
    <source>
        <dbReference type="PDB" id="6E28"/>
    </source>
</evidence>
<evidence type="ECO:0007829" key="52">
    <source>
        <dbReference type="PDB" id="6N2M"/>
    </source>
</evidence>
<accession>Q9H257</accession>
<accession>Q5SXM5</accession>
<accession>Q5SXM6</accession>
<accession>Q9H854</accession>
<keyword id="KW-0002">3D-structure</keyword>
<keyword id="KW-1064">Adaptive immunity</keyword>
<keyword id="KW-0025">Alternative splicing</keyword>
<keyword id="KW-0175">Coiled coil</keyword>
<keyword id="KW-0963">Cytoplasm</keyword>
<keyword id="KW-0225">Disease variant</keyword>
<keyword id="KW-0391">Immunity</keyword>
<keyword id="KW-0399">Innate immunity</keyword>
<keyword id="KW-1017">Isopeptide bond</keyword>
<keyword id="KW-0479">Metal-binding</keyword>
<keyword id="KW-0597">Phosphoprotein</keyword>
<keyword id="KW-1267">Proteomics identification</keyword>
<keyword id="KW-1185">Reference proteome</keyword>
<keyword id="KW-0832">Ubl conjugation</keyword>
<keyword id="KW-0862">Zinc</keyword>
<reference key="1">
    <citation type="journal article" date="2000" name="J. Biol. Chem.">
        <title>CARD9 is a novel caspase recruitment domain-containing protein that interacts with Bcl10/CLAP and activates NF-kappa B.</title>
        <authorList>
            <person name="Bertin J."/>
            <person name="Guo Y."/>
            <person name="Wang L."/>
            <person name="Srinivasula S.M."/>
            <person name="Jacobson M.D."/>
            <person name="Poyet J.-L."/>
            <person name="Merriam S."/>
            <person name="Du M.-Q."/>
            <person name="Dyer M.J.S."/>
            <person name="Robison K.E."/>
            <person name="DiStefano P.S."/>
            <person name="Alnemri E.S."/>
        </authorList>
    </citation>
    <scope>NUCLEOTIDE SEQUENCE [MRNA] (ISOFORM 1)</scope>
    <scope>VARIANT ASN-12</scope>
    <scope>FUNCTION</scope>
    <scope>SUBCELLULAR LOCATION</scope>
    <scope>TISSUE SPECIFICITY</scope>
    <scope>INTERACTION WITH BCL10</scope>
</reference>
<reference key="2">
    <citation type="journal article" date="2004" name="Nat. Genet.">
        <title>Complete sequencing and characterization of 21,243 full-length human cDNAs.</title>
        <authorList>
            <person name="Ota T."/>
            <person name="Suzuki Y."/>
            <person name="Nishikawa T."/>
            <person name="Otsuki T."/>
            <person name="Sugiyama T."/>
            <person name="Irie R."/>
            <person name="Wakamatsu A."/>
            <person name="Hayashi K."/>
            <person name="Sato H."/>
            <person name="Nagai K."/>
            <person name="Kimura K."/>
            <person name="Makita H."/>
            <person name="Sekine M."/>
            <person name="Obayashi M."/>
            <person name="Nishi T."/>
            <person name="Shibahara T."/>
            <person name="Tanaka T."/>
            <person name="Ishii S."/>
            <person name="Yamamoto J."/>
            <person name="Saito K."/>
            <person name="Kawai Y."/>
            <person name="Isono Y."/>
            <person name="Nakamura Y."/>
            <person name="Nagahari K."/>
            <person name="Murakami K."/>
            <person name="Yasuda T."/>
            <person name="Iwayanagi T."/>
            <person name="Wagatsuma M."/>
            <person name="Shiratori A."/>
            <person name="Sudo H."/>
            <person name="Hosoiri T."/>
            <person name="Kaku Y."/>
            <person name="Kodaira H."/>
            <person name="Kondo H."/>
            <person name="Sugawara M."/>
            <person name="Takahashi M."/>
            <person name="Kanda K."/>
            <person name="Yokoi T."/>
            <person name="Furuya T."/>
            <person name="Kikkawa E."/>
            <person name="Omura Y."/>
            <person name="Abe K."/>
            <person name="Kamihara K."/>
            <person name="Katsuta N."/>
            <person name="Sato K."/>
            <person name="Tanikawa M."/>
            <person name="Yamazaki M."/>
            <person name="Ninomiya K."/>
            <person name="Ishibashi T."/>
            <person name="Yamashita H."/>
            <person name="Murakawa K."/>
            <person name="Fujimori K."/>
            <person name="Tanai H."/>
            <person name="Kimata M."/>
            <person name="Watanabe M."/>
            <person name="Hiraoka S."/>
            <person name="Chiba Y."/>
            <person name="Ishida S."/>
            <person name="Ono Y."/>
            <person name="Takiguchi S."/>
            <person name="Watanabe S."/>
            <person name="Yosida M."/>
            <person name="Hotuta T."/>
            <person name="Kusano J."/>
            <person name="Kanehori K."/>
            <person name="Takahashi-Fujii A."/>
            <person name="Hara H."/>
            <person name="Tanase T.-O."/>
            <person name="Nomura Y."/>
            <person name="Togiya S."/>
            <person name="Komai F."/>
            <person name="Hara R."/>
            <person name="Takeuchi K."/>
            <person name="Arita M."/>
            <person name="Imose N."/>
            <person name="Musashino K."/>
            <person name="Yuuki H."/>
            <person name="Oshima A."/>
            <person name="Sasaki N."/>
            <person name="Aotsuka S."/>
            <person name="Yoshikawa Y."/>
            <person name="Matsunawa H."/>
            <person name="Ichihara T."/>
            <person name="Shiohata N."/>
            <person name="Sano S."/>
            <person name="Moriya S."/>
            <person name="Momiyama H."/>
            <person name="Satoh N."/>
            <person name="Takami S."/>
            <person name="Terashima Y."/>
            <person name="Suzuki O."/>
            <person name="Nakagawa S."/>
            <person name="Senoh A."/>
            <person name="Mizoguchi H."/>
            <person name="Goto Y."/>
            <person name="Shimizu F."/>
            <person name="Wakebe H."/>
            <person name="Hishigaki H."/>
            <person name="Watanabe T."/>
            <person name="Sugiyama A."/>
            <person name="Takemoto M."/>
            <person name="Kawakami B."/>
            <person name="Yamazaki M."/>
            <person name="Watanabe K."/>
            <person name="Kumagai A."/>
            <person name="Itakura S."/>
            <person name="Fukuzumi Y."/>
            <person name="Fujimori Y."/>
            <person name="Komiyama M."/>
            <person name="Tashiro H."/>
            <person name="Tanigami A."/>
            <person name="Fujiwara T."/>
            <person name="Ono T."/>
            <person name="Yamada K."/>
            <person name="Fujii Y."/>
            <person name="Ozaki K."/>
            <person name="Hirao M."/>
            <person name="Ohmori Y."/>
            <person name="Kawabata A."/>
            <person name="Hikiji T."/>
            <person name="Kobatake N."/>
            <person name="Inagaki H."/>
            <person name="Ikema Y."/>
            <person name="Okamoto S."/>
            <person name="Okitani R."/>
            <person name="Kawakami T."/>
            <person name="Noguchi S."/>
            <person name="Itoh T."/>
            <person name="Shigeta K."/>
            <person name="Senba T."/>
            <person name="Matsumura K."/>
            <person name="Nakajima Y."/>
            <person name="Mizuno T."/>
            <person name="Morinaga M."/>
            <person name="Sasaki M."/>
            <person name="Togashi T."/>
            <person name="Oyama M."/>
            <person name="Hata H."/>
            <person name="Watanabe M."/>
            <person name="Komatsu T."/>
            <person name="Mizushima-Sugano J."/>
            <person name="Satoh T."/>
            <person name="Shirai Y."/>
            <person name="Takahashi Y."/>
            <person name="Nakagawa K."/>
            <person name="Okumura K."/>
            <person name="Nagase T."/>
            <person name="Nomura N."/>
            <person name="Kikuchi H."/>
            <person name="Masuho Y."/>
            <person name="Yamashita R."/>
            <person name="Nakai K."/>
            <person name="Yada T."/>
            <person name="Nakamura Y."/>
            <person name="Ohara O."/>
            <person name="Isogai T."/>
            <person name="Sugano S."/>
        </authorList>
    </citation>
    <scope>NUCLEOTIDE SEQUENCE [LARGE SCALE MRNA] (ISOFORMS 1 AND 3)</scope>
    <scope>VARIANT ASN-12</scope>
    <source>
        <tissue>Retinoblastoma</tissue>
        <tissue>Synovium</tissue>
    </source>
</reference>
<reference key="3">
    <citation type="journal article" date="2004" name="Nature">
        <title>DNA sequence and analysis of human chromosome 9.</title>
        <authorList>
            <person name="Humphray S.J."/>
            <person name="Oliver K."/>
            <person name="Hunt A.R."/>
            <person name="Plumb R.W."/>
            <person name="Loveland J.E."/>
            <person name="Howe K.L."/>
            <person name="Andrews T.D."/>
            <person name="Searle S."/>
            <person name="Hunt S.E."/>
            <person name="Scott C.E."/>
            <person name="Jones M.C."/>
            <person name="Ainscough R."/>
            <person name="Almeida J.P."/>
            <person name="Ambrose K.D."/>
            <person name="Ashwell R.I.S."/>
            <person name="Babbage A.K."/>
            <person name="Babbage S."/>
            <person name="Bagguley C.L."/>
            <person name="Bailey J."/>
            <person name="Banerjee R."/>
            <person name="Barker D.J."/>
            <person name="Barlow K.F."/>
            <person name="Bates K."/>
            <person name="Beasley H."/>
            <person name="Beasley O."/>
            <person name="Bird C.P."/>
            <person name="Bray-Allen S."/>
            <person name="Brown A.J."/>
            <person name="Brown J.Y."/>
            <person name="Burford D."/>
            <person name="Burrill W."/>
            <person name="Burton J."/>
            <person name="Carder C."/>
            <person name="Carter N.P."/>
            <person name="Chapman J.C."/>
            <person name="Chen Y."/>
            <person name="Clarke G."/>
            <person name="Clark S.Y."/>
            <person name="Clee C.M."/>
            <person name="Clegg S."/>
            <person name="Collier R.E."/>
            <person name="Corby N."/>
            <person name="Crosier M."/>
            <person name="Cummings A.T."/>
            <person name="Davies J."/>
            <person name="Dhami P."/>
            <person name="Dunn M."/>
            <person name="Dutta I."/>
            <person name="Dyer L.W."/>
            <person name="Earthrowl M.E."/>
            <person name="Faulkner L."/>
            <person name="Fleming C.J."/>
            <person name="Frankish A."/>
            <person name="Frankland J.A."/>
            <person name="French L."/>
            <person name="Fricker D.G."/>
            <person name="Garner P."/>
            <person name="Garnett J."/>
            <person name="Ghori J."/>
            <person name="Gilbert J.G.R."/>
            <person name="Glison C."/>
            <person name="Grafham D.V."/>
            <person name="Gribble S."/>
            <person name="Griffiths C."/>
            <person name="Griffiths-Jones S."/>
            <person name="Grocock R."/>
            <person name="Guy J."/>
            <person name="Hall R.E."/>
            <person name="Hammond S."/>
            <person name="Harley J.L."/>
            <person name="Harrison E.S.I."/>
            <person name="Hart E.A."/>
            <person name="Heath P.D."/>
            <person name="Henderson C.D."/>
            <person name="Hopkins B.L."/>
            <person name="Howard P.J."/>
            <person name="Howden P.J."/>
            <person name="Huckle E."/>
            <person name="Johnson C."/>
            <person name="Johnson D."/>
            <person name="Joy A.A."/>
            <person name="Kay M."/>
            <person name="Keenan S."/>
            <person name="Kershaw J.K."/>
            <person name="Kimberley A.M."/>
            <person name="King A."/>
            <person name="Knights A."/>
            <person name="Laird G.K."/>
            <person name="Langford C."/>
            <person name="Lawlor S."/>
            <person name="Leongamornlert D.A."/>
            <person name="Leversha M."/>
            <person name="Lloyd C."/>
            <person name="Lloyd D.M."/>
            <person name="Lovell J."/>
            <person name="Martin S."/>
            <person name="Mashreghi-Mohammadi M."/>
            <person name="Matthews L."/>
            <person name="McLaren S."/>
            <person name="McLay K.E."/>
            <person name="McMurray A."/>
            <person name="Milne S."/>
            <person name="Nickerson T."/>
            <person name="Nisbett J."/>
            <person name="Nordsiek G."/>
            <person name="Pearce A.V."/>
            <person name="Peck A.I."/>
            <person name="Porter K.M."/>
            <person name="Pandian R."/>
            <person name="Pelan S."/>
            <person name="Phillimore B."/>
            <person name="Povey S."/>
            <person name="Ramsey Y."/>
            <person name="Rand V."/>
            <person name="Scharfe M."/>
            <person name="Sehra H.K."/>
            <person name="Shownkeen R."/>
            <person name="Sims S.K."/>
            <person name="Skuce C.D."/>
            <person name="Smith M."/>
            <person name="Steward C.A."/>
            <person name="Swarbreck D."/>
            <person name="Sycamore N."/>
            <person name="Tester J."/>
            <person name="Thorpe A."/>
            <person name="Tracey A."/>
            <person name="Tromans A."/>
            <person name="Thomas D.W."/>
            <person name="Wall M."/>
            <person name="Wallis J.M."/>
            <person name="West A.P."/>
            <person name="Whitehead S.L."/>
            <person name="Willey D.L."/>
            <person name="Williams S.A."/>
            <person name="Wilming L."/>
            <person name="Wray P.W."/>
            <person name="Young L."/>
            <person name="Ashurst J.L."/>
            <person name="Coulson A."/>
            <person name="Blocker H."/>
            <person name="Durbin R.M."/>
            <person name="Sulston J.E."/>
            <person name="Hubbard T."/>
            <person name="Jackson M.J."/>
            <person name="Bentley D.R."/>
            <person name="Beck S."/>
            <person name="Rogers J."/>
            <person name="Dunham I."/>
        </authorList>
    </citation>
    <scope>NUCLEOTIDE SEQUENCE [LARGE SCALE GENOMIC DNA]</scope>
</reference>
<reference key="4">
    <citation type="submission" date="2005-07" db="EMBL/GenBank/DDBJ databases">
        <authorList>
            <person name="Mural R.J."/>
            <person name="Istrail S."/>
            <person name="Sutton G."/>
            <person name="Florea L."/>
            <person name="Halpern A.L."/>
            <person name="Mobarry C.M."/>
            <person name="Lippert R."/>
            <person name="Walenz B."/>
            <person name="Shatkay H."/>
            <person name="Dew I."/>
            <person name="Miller J.R."/>
            <person name="Flanigan M.J."/>
            <person name="Edwards N.J."/>
            <person name="Bolanos R."/>
            <person name="Fasulo D."/>
            <person name="Halldorsson B.V."/>
            <person name="Hannenhalli S."/>
            <person name="Turner R."/>
            <person name="Yooseph S."/>
            <person name="Lu F."/>
            <person name="Nusskern D.R."/>
            <person name="Shue B.C."/>
            <person name="Zheng X.H."/>
            <person name="Zhong F."/>
            <person name="Delcher A.L."/>
            <person name="Huson D.H."/>
            <person name="Kravitz S.A."/>
            <person name="Mouchard L."/>
            <person name="Reinert K."/>
            <person name="Remington K.A."/>
            <person name="Clark A.G."/>
            <person name="Waterman M.S."/>
            <person name="Eichler E.E."/>
            <person name="Adams M.D."/>
            <person name="Hunkapiller M.W."/>
            <person name="Myers E.W."/>
            <person name="Venter J.C."/>
        </authorList>
    </citation>
    <scope>NUCLEOTIDE SEQUENCE [LARGE SCALE GENOMIC DNA]</scope>
</reference>
<reference key="5">
    <citation type="journal article" date="2004" name="Genome Res.">
        <title>The status, quality, and expansion of the NIH full-length cDNA project: the Mammalian Gene Collection (MGC).</title>
        <authorList>
            <consortium name="The MGC Project Team"/>
        </authorList>
    </citation>
    <scope>NUCLEOTIDE SEQUENCE [LARGE SCALE MRNA] (ISOFORM 2)</scope>
    <source>
        <tissue>Muscle</tissue>
    </source>
</reference>
<reference key="6">
    <citation type="journal article" date="2008" name="J. Proteome Res.">
        <title>Phosphoproteome of resting human platelets.</title>
        <authorList>
            <person name="Zahedi R.P."/>
            <person name="Lewandrowski U."/>
            <person name="Wiesner J."/>
            <person name="Wortelkamp S."/>
            <person name="Moebius J."/>
            <person name="Schuetz C."/>
            <person name="Walter U."/>
            <person name="Gambaryan S."/>
            <person name="Sickmann A."/>
        </authorList>
    </citation>
    <scope>PHOSPHORYLATION [LARGE SCALE ANALYSIS] AT SER-460</scope>
    <scope>IDENTIFICATION BY MASS SPECTROMETRY [LARGE SCALE ANALYSIS]</scope>
    <source>
        <tissue>Platelet</tissue>
    </source>
</reference>
<reference key="7">
    <citation type="journal article" date="2009" name="N. Engl. J. Med.">
        <title>A homozygous CARD9 mutation in a family with susceptibility to fungal infections.</title>
        <authorList>
            <person name="Glocker E.-O."/>
            <person name="Hennigs A."/>
            <person name="Nabavi M."/>
            <person name="Schaeffer A.A."/>
            <person name="Woellner C."/>
            <person name="Salzer U."/>
            <person name="Pfeifer D."/>
            <person name="Veelken H."/>
            <person name="Warnatz K."/>
            <person name="Tahami F."/>
            <person name="Jamal S."/>
            <person name="Manguiat A."/>
            <person name="Rezaei N."/>
            <person name="Amirzargar A.A."/>
            <person name="Plebani A."/>
            <person name="Hannesschlaeger N."/>
            <person name="Gross O."/>
            <person name="Ruland J."/>
            <person name="Grimbacher B."/>
        </authorList>
    </citation>
    <scope>INVOLVEMENT IN IMD103</scope>
    <scope>VARIANT IMD103 295-GLN--SER-536 DEL</scope>
</reference>
<reference key="8">
    <citation type="journal article" date="2013" name="J. Proteome Res.">
        <title>Toward a comprehensive characterization of a human cancer cell phosphoproteome.</title>
        <authorList>
            <person name="Zhou H."/>
            <person name="Di Palma S."/>
            <person name="Preisinger C."/>
            <person name="Peng M."/>
            <person name="Polat A.N."/>
            <person name="Heck A.J."/>
            <person name="Mohammed S."/>
        </authorList>
    </citation>
    <scope>PHOSPHORYLATION [LARGE SCALE ANALYSIS] AT SER-277; SER-425; SER-483 AND SER-498</scope>
    <scope>IDENTIFICATION BY MASS SPECTROMETRY [LARGE SCALE ANALYSIS]</scope>
    <source>
        <tissue>Erythroleukemia</tissue>
    </source>
</reference>
<reference key="9">
    <citation type="journal article" date="2014" name="FEBS Lett.">
        <title>Interaction between NOD2 and CARD9 involves the NOD2 NACHT and the linker region between the NOD2 CARDs and NACHT domain.</title>
        <authorList>
            <person name="Parkhouse R."/>
            <person name="Boyle J.P."/>
            <person name="Mayle S."/>
            <person name="Sawmynaden K."/>
            <person name="Rittinger K."/>
            <person name="Monie T.P."/>
        </authorList>
    </citation>
    <scope>INTERACTION WITH NOD2</scope>
</reference>
<reference key="10">
    <citation type="journal article" date="2015" name="Immunity">
        <title>Ubiquitin ligase TRIM62 regulates CARD9-mediated anti-fungal immunity and intestinal inflammation.</title>
        <authorList>
            <person name="Cao Z."/>
            <person name="Conway K.L."/>
            <person name="Heath R.J."/>
            <person name="Rush J.S."/>
            <person name="Leshchiner E.S."/>
            <person name="Ramirez-Ortiz Z.G."/>
            <person name="Nedelsky N.B."/>
            <person name="Huang H."/>
            <person name="Ng A."/>
            <person name="Gardet A."/>
            <person name="Cheng S.C."/>
            <person name="Shamji A.F."/>
            <person name="Rioux J.D."/>
            <person name="Wijmenga C."/>
            <person name="Netea M.G."/>
            <person name="Means T.K."/>
            <person name="Daly M.J."/>
            <person name="Xavier R.J."/>
        </authorList>
    </citation>
    <scope>UBIQUITINATION AT LYS-125</scope>
    <scope>FUNCTION</scope>
    <scope>ACTIVITY REGULATION</scope>
    <scope>SUBCELLULAR LOCATION</scope>
    <scope>INTERACTION WITH BCL10</scope>
    <scope>MUTAGENESIS OF LYS-125</scope>
</reference>
<reference key="11">
    <citation type="journal article" date="2016" name="Br. J. Dermatol.">
        <title>CARD9 mutation linked to Corynespora cassiicola infection in a Chinese patient.</title>
        <authorList>
            <person name="Yan X.X."/>
            <person name="Yu C.P."/>
            <person name="Fu X.A."/>
            <person name="Bao F.F."/>
            <person name="Du D.H."/>
            <person name="Wang C."/>
            <person name="Wang N."/>
            <person name="Wang S.F."/>
            <person name="Shi Z.X."/>
            <person name="Zhou G.Z."/>
            <person name="Tian H.Q."/>
            <person name="Liu H."/>
            <person name="Zhang F.R."/>
        </authorList>
    </citation>
    <scope>INVOLVEMENT IN IMD103</scope>
</reference>
<reference key="12">
    <citation type="journal article" date="2018" name="Mycoses">
        <title>Novel bi-allelic splice mutations in CARD9 causing adult-onset Candida endophthalmitis.</title>
        <authorList>
            <person name="Gavino C."/>
            <person name="Mellinghoff S."/>
            <person name="Cornely O.A."/>
            <person name="Landekic M."/>
            <person name="Le C."/>
            <person name="Langelier M."/>
            <person name="Golizeh M."/>
            <person name="Proske S."/>
            <person name="Vinh D.C."/>
        </authorList>
    </citation>
    <scope>INVOLVEMENT IN IMD103</scope>
</reference>
<reference key="13">
    <citation type="journal article" date="2020" name="Immunohorizons">
        <title>USP15 deubiquitinates CARD9 to downregulate C-type lectin receptor-mediated signaling.</title>
        <authorList>
            <person name="Xu W."/>
            <person name="Rush J.S."/>
            <person name="Graham D.B."/>
            <person name="Cao Z."/>
            <person name="Xavier R.J."/>
        </authorList>
    </citation>
    <scope>UBIQUITINATION AT LYS-125</scope>
    <scope>DEUBIQUITINATION AT LYS-125</scope>
</reference>
<reference evidence="43 44 45 46" key="14">
    <citation type="journal article" date="2018" name="J. Biol. Chem.">
        <title>Picomolar zinc binding modulates formation of Bcl10-nucleating assemblies of the caspase recruitment domain (CARD) of CARD9.</title>
        <authorList>
            <person name="Holliday M.J."/>
            <person name="Ferrao R."/>
            <person name="de Leon Boenig G."/>
            <person name="Estevez A."/>
            <person name="Helgason E."/>
            <person name="Rohou A."/>
            <person name="Dueber E.C."/>
            <person name="Fairbrother W.J."/>
        </authorList>
    </citation>
    <scope>STRUCTURE BY NMR OF 1-97 IN COMPLEX WITH ZINC</scope>
    <scope>SUBUNIT</scope>
    <scope>ACTIVITY REGULATION</scope>
    <scope>MUTAGENESIS OF CYS-10; CYS-37 AND HIS-73</scope>
</reference>
<reference evidence="47 48" key="15">
    <citation type="journal article" date="2019" name="Nat. Commun.">
        <title>Structures of autoinhibited and polymerized forms of CARD9 reveal mechanisms of CARD9 and CARD11 activation.</title>
        <authorList>
            <person name="Holliday M.J."/>
            <person name="Witt A."/>
            <person name="Rodriguez Gama A."/>
            <person name="Walters B.T."/>
            <person name="Arthur C.P."/>
            <person name="Halfmann R."/>
            <person name="Rohou A."/>
            <person name="Dueber E.C."/>
            <person name="Fairbrother W.J."/>
        </authorList>
    </citation>
    <scope>STRUCTURE BY ELECTRON MICROSCOPY (4.00 ANGSTROMS) OF 2-152 IN COMPLEX WITH ZINC</scope>
    <scope>FUNCTION</scope>
    <scope>ACTIVITY REGULATION</scope>
    <scope>INTERACTION WITH BCL10</scope>
    <scope>UBIQUITINATION AT LYS-125</scope>
    <scope>SUBUNIT</scope>
    <scope>DOMAIN</scope>
    <scope>MUTAGENESIS OF GLU-15; ARG-35; ASP-43; LYS-58; ASP-66; ARG-101; PHE-103; ILE-107; GLY-111; GLY-114 AND LEU-115</scope>
    <scope>CHARACTERIZATION OF VARIANT IMD103 GLN-35</scope>
</reference>
<reference key="16">
    <citation type="journal article" date="2013" name="Blood">
        <title>Invasive fungal infection and impaired neutrophil killing in human CARD9 deficiency.</title>
        <authorList>
            <person name="Drewniak A."/>
            <person name="Gazendam R.P."/>
            <person name="Tool A.T."/>
            <person name="van Houdt M."/>
            <person name="Jansen M.H."/>
            <person name="van Hamme J.L."/>
            <person name="van Leeuwen E.M."/>
            <person name="Roos D."/>
            <person name="Scalais E."/>
            <person name="de Beaufort C."/>
            <person name="Janssen H."/>
            <person name="van den Berg T.K."/>
            <person name="Kuijpers T.W."/>
        </authorList>
    </citation>
    <scope>VARIANTS IMD103 SER-72 AND PRO-373</scope>
</reference>
<reference key="17">
    <citation type="journal article" date="2013" name="N. Engl. J. Med.">
        <title>Deep dermatophytosis and inherited CARD9 deficiency.</title>
        <authorList>
            <person name="Lanternier F."/>
            <person name="Pathan S."/>
            <person name="Vincent Q.B."/>
            <person name="Liu L."/>
            <person name="Cypowyj S."/>
            <person name="Prando C."/>
            <person name="Migaud M."/>
            <person name="Taibi L."/>
            <person name="Ammar-Khodja A."/>
            <person name="Boudghene Stambouli O."/>
            <person name="Guellil B."/>
            <person name="Jacobs F."/>
            <person name="Goffard J.C."/>
            <person name="Schepers K."/>
            <person name="del Marmol V."/>
            <person name="Boussofara L."/>
            <person name="Denguezli M."/>
            <person name="Larif M."/>
            <person name="Bachelez H."/>
            <person name="Michel L."/>
            <person name="Lefranc G."/>
            <person name="Hay R."/>
            <person name="Jouvion G."/>
            <person name="Chretien F."/>
            <person name="Fraitag S."/>
            <person name="Bougnoux M.E."/>
            <person name="Boudia M."/>
            <person name="Abel L."/>
            <person name="Lortholary O."/>
            <person name="Casanova J.L."/>
            <person name="Picard C."/>
            <person name="Grimbacher B."/>
            <person name="Puel A."/>
        </authorList>
    </citation>
    <scope>VARIANTS IMD103 CYS-101 AND 289-GLN--SER-536 DEL</scope>
</reference>
<reference key="18">
    <citation type="journal article" date="2014" name="Clin. Infect. Dis.">
        <title>CARD9 deficiency and spontaneous central nervous system candidiasis: complete clinical remission with GM-CSF therapy.</title>
        <authorList>
            <person name="Gavino C."/>
            <person name="Cotter A."/>
            <person name="Lichtenstein D."/>
            <person name="Lejtenyi D."/>
            <person name="Fortin C."/>
            <person name="Legault C."/>
            <person name="Alirezaie N."/>
            <person name="Majewski J."/>
            <person name="Sheppard D.C."/>
            <person name="Behr M.A."/>
            <person name="Foulkes W.D."/>
            <person name="Vinh D.C."/>
        </authorList>
    </citation>
    <scope>VARIANT IMD103 HIS-91</scope>
</reference>
<reference key="19">
    <citation type="journal article" date="2014" name="J. Allergy Clin. Immunol.">
        <title>CARD9 mutations linked to subcutaneous phaeohyphomycosis and TH17 cell deficiencies.</title>
        <authorList>
            <person name="Wang X."/>
            <person name="Wang W."/>
            <person name="Lin Z."/>
            <person name="Wang X."/>
            <person name="Li T."/>
            <person name="Yu J."/>
            <person name="Liu W."/>
            <person name="Tong Z."/>
            <person name="Xu Y."/>
            <person name="Zhang J."/>
            <person name="Guan L."/>
            <person name="Dai L."/>
            <person name="Yang Y."/>
            <person name="Han W."/>
            <person name="Li R."/>
        </authorList>
    </citation>
    <scope>VARIANT IMD103 158-GLN--SER-536 DEL</scope>
    <scope>CHARACTERIZATION OF VARIANT IMD103 158-GLN--SER-536 DEL</scope>
    <scope>FUNCTION</scope>
</reference>
<reference key="20">
    <citation type="journal article" date="2015" name="JAMA Dermatol.">
        <title>Posaconazole treatment of extensive skin and nail dermatophytosis due to autosomal recessive deficiency of CARD9.</title>
        <authorList>
            <person name="Jachiet M."/>
            <person name="Lanternier F."/>
            <person name="Rybojad M."/>
            <person name="Bagot M."/>
            <person name="Ibrahim L."/>
            <person name="Casanova J.L."/>
            <person name="Puel A."/>
            <person name="Bouaziz J.D."/>
        </authorList>
    </citation>
    <scope>VARIANT IMD103 289-GLN--SER-536 DEL</scope>
</reference>
<reference key="21">
    <citation type="journal article" date="2015" name="J. Allergy Clin. Immunol.">
        <title>Inherited CARD9 deficiency in otherwise healthy children and adults with Candida species-induced meningoencephalitis, colitis, or both.</title>
        <authorList>
            <person name="Lanternier F."/>
            <person name="Mahdaviani S.A."/>
            <person name="Barbati E."/>
            <person name="Chaussade H."/>
            <person name="Koumar Y."/>
            <person name="Levy R."/>
            <person name="Denis B."/>
            <person name="Brunel A.S."/>
            <person name="Martin S."/>
            <person name="Loop M."/>
            <person name="Peeters J."/>
            <person name="de Selys A."/>
            <person name="Vanclaire J."/>
            <person name="Vermylen C."/>
            <person name="Nassogne M.C."/>
            <person name="Chatzis O."/>
            <person name="Liu L."/>
            <person name="Migaud M."/>
            <person name="Pedergnana V."/>
            <person name="Desoubeaux G."/>
            <person name="Jouvion G."/>
            <person name="Chretien F."/>
            <person name="Darazam I.A."/>
            <person name="Schaeffer A.A."/>
            <person name="Netea M.G."/>
            <person name="De Bruycker J.J."/>
            <person name="Bernard L."/>
            <person name="Reynes J."/>
            <person name="Amazrine N."/>
            <person name="Abel L."/>
            <person name="Van der Linden D."/>
            <person name="Harrison T."/>
            <person name="Picard C."/>
            <person name="Lortholary O."/>
            <person name="Mansouri D."/>
            <person name="Casanova J.L."/>
            <person name="Puel A."/>
        </authorList>
    </citation>
    <scope>VARIANTS IMD103 GLN-35; TRP-70; 289-GLN--SER-536 DEL AND 295-GLN--SER-536 DEL</scope>
    <scope>CHARACTERIZATION OF VARIANTS IMD103 GLN-35; TRP-70 AND 295-GLN--SER-536 DEL</scope>
    <scope>FUNCTION</scope>
</reference>
<reference key="22">
    <citation type="journal article" date="2015" name="J. Clin. Immunol.">
        <title>A homozygous CARD9 mutation in a Brazilian patient with deep dermatophytosis.</title>
        <authorList>
            <person name="Grumach A.S."/>
            <person name="de Queiroz-Telles F."/>
            <person name="Migaud M."/>
            <person name="Lanternier F."/>
            <person name="Filho N.R."/>
            <person name="Palma S.M."/>
            <person name="Constantino-Silva R.N."/>
            <person name="Casanova J.L."/>
            <person name="Puel A."/>
        </authorList>
    </citation>
    <scope>VARIANT IMD103 LEU-101</scope>
</reference>
<reference key="23">
    <citation type="journal article" date="2015" name="J. Infect. Dis.">
        <title>Inherited CARD9 deficiency in 2 unrelated patients with invasive Exophiala infection.</title>
        <authorList>
            <person name="Lanternier F."/>
            <person name="Barbati E."/>
            <person name="Meinzer U."/>
            <person name="Liu L."/>
            <person name="Pedergnana V."/>
            <person name="Migaud M."/>
            <person name="Heritier S."/>
            <person name="Chomton M."/>
            <person name="Fremond M.L."/>
            <person name="Gonzales E."/>
            <person name="Galeotti C."/>
            <person name="Romana S."/>
            <person name="Jacquemin E."/>
            <person name="Angoulvant A."/>
            <person name="Bidault V."/>
            <person name="Canioni D."/>
            <person name="Lachenaud J."/>
            <person name="Mansouri D."/>
            <person name="Mahdaviani S.A."/>
            <person name="Adimi P."/>
            <person name="Mansouri N."/>
            <person name="Jamshidi M."/>
            <person name="Bougnoux M.E."/>
            <person name="Abel L."/>
            <person name="Lortholary O."/>
            <person name="Blanche S."/>
            <person name="Casanova J.L."/>
            <person name="Picard C."/>
            <person name="Puel A."/>
        </authorList>
    </citation>
    <scope>VARIANTS IMD103 TRP-18 AND GLU-323 DEL</scope>
    <scope>CHARACTERIZATION OF VARIANT IMD103 TRP-18</scope>
    <scope>FUNCTION</scope>
</reference>
<reference key="24">
    <citation type="journal article" date="2015" name="Pediatr. Infect. Dis. J.">
        <title>Chronic candida albicans meningitis in a 4-year-old girl with a homozygous mutation in the CARD9 gene (Q295X).</title>
        <authorList>
            <person name="Herbst M."/>
            <person name="Gazendam R."/>
            <person name="Reimnitz D."/>
            <person name="Sawalle-Belohradsky J."/>
            <person name="Groll A."/>
            <person name="Schlegel P.G."/>
            <person name="Belohradsky B."/>
            <person name="Renner E."/>
            <person name="Klepper J."/>
            <person name="Grimbacher B."/>
            <person name="Kuijpers T."/>
            <person name="Liese J."/>
        </authorList>
    </citation>
    <scope>VARIANT IMD103 295-GLN--SER-536 DEL</scope>
</reference>
<reference key="25">
    <citation type="journal article" date="2015" name="PLoS Pathog.">
        <title>CARD9-dependent neutrophil recruitment protects against fungal invasion of the central nervous system.</title>
        <authorList>
            <person name="Drummond R.A."/>
            <person name="Collar A.L."/>
            <person name="Swamydas M."/>
            <person name="Rodriguez C.A."/>
            <person name="Lim J.K."/>
            <person name="Mendez L.M."/>
            <person name="Fink D.L."/>
            <person name="Hsu A.P."/>
            <person name="Zhai B."/>
            <person name="Karauzum H."/>
            <person name="Mikelis C.M."/>
            <person name="Rose S.R."/>
            <person name="Ferre E.M."/>
            <person name="Yockey L."/>
            <person name="Lemberg K."/>
            <person name="Kuehn H.S."/>
            <person name="Rosenzweig S.D."/>
            <person name="Lin X."/>
            <person name="Chittiboina P."/>
            <person name="Datta S.K."/>
            <person name="Belhorn T.H."/>
            <person name="Weimer E.T."/>
            <person name="Hernandez M.L."/>
            <person name="Hohl T.M."/>
            <person name="Kuhns D.B."/>
            <person name="Lionakis M.S."/>
        </authorList>
    </citation>
    <scope>VARIANT IMD103 HIS-57</scope>
    <scope>CHARACTERIZATION OF VARIANT IMD103 HIS-57</scope>
    <scope>FUNCTION</scope>
</reference>
<reference key="26">
    <citation type="journal article" date="2016" name="J. Clin. Immunol.">
        <title>Chronic and invasive fungal infections in a family with CARD9 deficiency.</title>
        <authorList>
            <person name="Alves de Medeiros A.K."/>
            <person name="Lodewick E."/>
            <person name="Bogaert D.J."/>
            <person name="Haerynck F."/>
            <person name="Van Daele S."/>
            <person name="Lambrecht B."/>
            <person name="Bosma S."/>
            <person name="Vanderdonckt L."/>
            <person name="Lortholary O."/>
            <person name="Migaud M."/>
            <person name="Casanova J.L."/>
            <person name="Puel A."/>
            <person name="Lanternier F."/>
            <person name="Lambert J."/>
            <person name="Brochez L."/>
            <person name="Dullaers M."/>
        </authorList>
    </citation>
    <scope>VARIANT IMD103 TRP-70</scope>
    <scope>CHARACTERIZATION OF VARIANT IMD103 TRP-70</scope>
    <scope>FUNCTION</scope>
</reference>
<reference key="27">
    <citation type="journal article" date="2016" name="BMJ Case Rep.">
        <title>Endogenous Candida endophthalmitis and osteomyelitis associated with CARD9 deficiency.</title>
        <authorList>
            <person name="Jones N."/>
            <person name="Garcez T."/>
            <person name="Newman W."/>
            <person name="Denning D."/>
        </authorList>
    </citation>
    <scope>VARIANT IMD103 PRO-380</scope>
</reference>
<reference key="28">
    <citation type="journal article" date="2016" name="J. Allergy Clin. Immunol.">
        <title>Impaired RASGRF1/ERK-mediated GM-CSF response characterizes CARD9 deficiency in French-Canadians.</title>
        <authorList>
            <person name="Gavino C."/>
            <person name="Hamel N."/>
            <person name="Zeng J.B."/>
            <person name="Legault C."/>
            <person name="Guiot M.C."/>
            <person name="Chankowsky J."/>
            <person name="Lejtenyi D."/>
            <person name="Lemire M."/>
            <person name="Alarie I."/>
            <person name="Dufresne S."/>
            <person name="Boursiquot J.N."/>
            <person name="McIntosh F."/>
            <person name="Langelier M."/>
            <person name="Behr M.A."/>
            <person name="Sheppard D.C."/>
            <person name="Foulkes W.D."/>
            <person name="Vinh D.C."/>
        </authorList>
    </citation>
    <scope>VARIANT IMD103 HIS-91</scope>
    <scope>CHARACTERIZATION OF VARIANT IMD103 HIS-91</scope>
    <scope>FUNCTION</scope>
    <scope>IDENTIFICATION IN THE CBM COMPLEX</scope>
    <scope>INTERACTION WITH RASGRF1</scope>
</reference>
<reference key="29">
    <citation type="journal article" date="2016" name="JCI Insight">
        <title>Extrapulmonary Aspergillus infection in patients with CARD9 deficiency.</title>
        <authorList>
            <person name="Rieber N."/>
            <person name="Gazendam R.P."/>
            <person name="Freeman A.F."/>
            <person name="Hsu A.P."/>
            <person name="Collar A.L."/>
            <person name="Sugui J.A."/>
            <person name="Drummond R.A."/>
            <person name="Rongkavilit C."/>
            <person name="Hoffman K."/>
            <person name="Henderson C."/>
            <person name="Clark L."/>
            <person name="Mezger M."/>
            <person name="Swamydas M."/>
            <person name="Engeholm M."/>
            <person name="Schuele R."/>
            <person name="Neumayer B."/>
            <person name="Ebel F."/>
            <person name="Mikelis C.M."/>
            <person name="Pittaluga S."/>
            <person name="Prasad V.K."/>
            <person name="Singh A."/>
            <person name="Milner J.D."/>
            <person name="Williams K.W."/>
            <person name="Lim J.K."/>
            <person name="Kwon-Chung K.J."/>
            <person name="Holland S.M."/>
            <person name="Hartl D."/>
            <person name="Kuijpers T.W."/>
            <person name="Lionakis M.S."/>
        </authorList>
    </citation>
    <scope>VARIANT IMD103 295-GLN--SER-536 DEL</scope>
    <scope>CHARACTERIZATION OF VARIANT IMD103 295-GLN--SER-536 DEL</scope>
    <scope>FUNCTION</scope>
</reference>
<reference key="30">
    <citation type="journal article" date="2016" name="Pediatr. Infect. Dis. J.">
        <title>Successful granulocyte colony-stimulating factor treatment of relapsing candida albicans meningoencephalitis caused by CARD9 deficiency.</title>
        <authorList>
            <person name="Celmeli F."/>
            <person name="Oztoprak N."/>
            <person name="Turkkahraman D."/>
            <person name="Seyman D."/>
            <person name="Mutlu E."/>
            <person name="Frede N."/>
            <person name="Koeksoy S."/>
            <person name="Grimbacher B."/>
        </authorList>
    </citation>
    <scope>VARIANT IMD103 295-GLN--SER-536 DEL</scope>
</reference>
<reference key="31">
    <citation type="journal article" date="2017" name="J. Mycol. Med.">
        <title>Dermatophytic disease with deficit in CARD9: A new case with a brain impairment.</title>
        <authorList>
            <person name="Boudghene Stambouli O."/>
            <person name="Amrani N."/>
            <person name="Boudghene Stambouli K."/>
            <person name="Bouali F."/>
        </authorList>
    </citation>
    <scope>VARIANT IMD103 289-GLN--SER-536 DEL</scope>
</reference>
<reference key="32">
    <citation type="journal article" date="2018" name="Clin. Immunol.">
        <title>A young girl with severe cerebral fungal infection due to card 9 deficiency.</title>
        <authorList>
            <person name="Cetinkaya P.G."/>
            <person name="Ayvaz D.C."/>
            <person name="Karaatmaca B."/>
            <person name="Gocmen R."/>
            <person name="Soeylemezoglu F."/>
            <person name="Bainter W."/>
            <person name="Chou J."/>
            <person name="Chatila T.A."/>
            <person name="Tezcan I."/>
        </authorList>
    </citation>
    <scope>VARIANT IMD103 295-GLN--SER-536 DEL</scope>
</reference>
<reference key="33">
    <citation type="journal article" date="2018" name="J. Invest. Dermatol.">
        <title>Impaired specific antifungal immunity in CARD9-deficient patients with phaeohyphomycosis.</title>
        <authorList>
            <person name="Wang X."/>
            <person name="Zhang R."/>
            <person name="Wu W."/>
            <person name="Song Y."/>
            <person name="Wan Z."/>
            <person name="Han W."/>
            <person name="Li R."/>
        </authorList>
    </citation>
    <scope>VARIANT IMD103 23-SER--SER-536 DEL</scope>
    <scope>CHARACTERIZATION OF VARIANT IMD103 23-SER--SER-536 DEL</scope>
    <scope>FUNCTION</scope>
</reference>
<reference key="34">
    <citation type="journal article" date="2020" name="J. Cutan. Pathol.">
        <title>Novel CARD9 mutation in a patient with chronic invasive dermatophyte infection (tinea profunda).</title>
        <authorList>
            <person name="Nazarian R.M."/>
            <person name="Lilly E."/>
            <person name="Gavino C."/>
            <person name="Hamilos D.L."/>
            <person name="Felsenstein D."/>
            <person name="Vinh D.C."/>
            <person name="Googe P.B."/>
        </authorList>
    </citation>
    <scope>VARIANT IMD103 HIS-91</scope>
</reference>
<reference key="35">
    <citation type="journal article" date="2021" name="Cell">
        <title>Human gut mycobiota tune immunity via CARD9-dependent induction of anti-fungal IgG antibodies.</title>
        <authorList>
            <person name="Doron I."/>
            <person name="Leonardi I."/>
            <person name="Li X.V."/>
            <person name="Fiers W.D."/>
            <person name="Semon A."/>
            <person name="Bialt-DeCelie M."/>
            <person name="Migaud M."/>
            <person name="Gao I.H."/>
            <person name="Lin W.Y."/>
            <person name="Kusakabe T."/>
            <person name="Puel A."/>
            <person name="Iliev I.D."/>
        </authorList>
    </citation>
    <scope>CHARACTERIZATION OF VARIANTS IMD103 GLN-35; TRP-70 AND 289-GLN--SER-536 DEL</scope>
    <scope>FUNCTION</scope>
    <scope>TISSUE SPECIFICITY</scope>
</reference>
<reference key="36">
    <citation type="journal article" date="2021" name="J. Clin. Immunol.">
        <title>Inherited CARD9 deficiency in a child with invasive disease due to Exophiala dermatitidis and two older but asymptomatic siblings.</title>
        <authorList>
            <person name="Imanaka Y."/>
            <person name="Taniguchi M."/>
            <person name="Doi T."/>
            <person name="Tsumura M."/>
            <person name="Nagaoka R."/>
            <person name="Shimomura M."/>
            <person name="Asano T."/>
            <person name="Kagawa R."/>
            <person name="Mizoguchi Y."/>
            <person name="Karakawa S."/>
            <person name="Arihiro K."/>
            <person name="Imai K."/>
            <person name="Morio T."/>
            <person name="Casanova J.L."/>
            <person name="Puel A."/>
            <person name="Ohara O."/>
            <person name="Kamei K."/>
            <person name="Kobayashi M."/>
            <person name="Okada S."/>
        </authorList>
    </citation>
    <scope>VARIANTS IMD103 GLU-196 AND PRO-373</scope>
    <scope>CHARACTERIZATION OF VARIANTS IMD103 TRP-70; GLU-196 AND PRO-373</scope>
    <scope>FUNCTION</scope>
</reference>
<organism>
    <name type="scientific">Homo sapiens</name>
    <name type="common">Human</name>
    <dbReference type="NCBI Taxonomy" id="9606"/>
    <lineage>
        <taxon>Eukaryota</taxon>
        <taxon>Metazoa</taxon>
        <taxon>Chordata</taxon>
        <taxon>Craniata</taxon>
        <taxon>Vertebrata</taxon>
        <taxon>Euteleostomi</taxon>
        <taxon>Mammalia</taxon>
        <taxon>Eutheria</taxon>
        <taxon>Euarchontoglires</taxon>
        <taxon>Primates</taxon>
        <taxon>Haplorrhini</taxon>
        <taxon>Catarrhini</taxon>
        <taxon>Hominidae</taxon>
        <taxon>Homo</taxon>
    </lineage>
</organism>
<sequence length="536" mass="62241">MSDYENDDECWSVLEGFRVTLTSVIDPSRITPYLRQCKVLNPDDEEQVLSDPNLVIRKRKVGVLLDILQRTGHKGYVAFLESLELYYPQLYKKVTGKEPARVFSMIIDASGESGLTQLLMTEVMKLQKKVQDLTALLSSKDDFIKELRVKDSLLRKHQERVQRLKEECEAGSRELKRCKEENYDLAMRLAHQSEEKGAALMRNRDLQLEIDQLKHSLMKAEDDCKVERKHTLKLRHAMEQRPSQELLWELQQEKALLQARVQELEASVQEGKLDRSSPYIQVLEEDWRQALRDHQEQANTIFSLRKDLRQGEARRLRCMEEKEMFELQCLALRKDSKMYKDRIEAILLQMEEVAIERDQAIATREELHAQHARGLQEKDALRKQVRELGEKADELQLQVFQCEAQLLAVEGRLRRQQLETLVLSSDLEDGSPRRSQELSLPQDLEDTQLSDKGCLAGGGSPKQPFAALHQEQVLRNPHDAGLSSGEPPEKERRRLKESFENYRRKRALRKMQKGWRQGEEDRENTTGSDNTDTEGS</sequence>
<comment type="function">
    <text evidence="1 6 11 14 16 20 21 23 25 26 29 32 35 36">Adapter protein that plays a key role in innate immune response against fungi by forming signaling complexes downstream of C-type lectin receptors (PubMed:26961233, PubMed:33558980). CARD9-mediated signals are essential for antifungal immunity against a subset of fungi from the phylum Ascomycota (PubMed:24231284, PubMed:25057046, PubMed:25702837, PubMed:26521038, PubMed:26679537, PubMed:26961233, PubMed:27777981, PubMed:29080677, PubMed:33558980). Transduces signals in myeloid cells downstream of C-type lectin receptors CLEC7A (dectin-1), CLEC6A (dectin-2) and CLEC4E (Mincle), which detect pathogen-associated molecular pattern metabolites (PAMPs), such as fungal carbohydrates, and trigger CARD9 activation (By similarity). Upon activation, CARD9 homooligomerizes to form a nucleating helical template that recruits BCL10 via CARD-CARD interaction, thereby promoting polymerization of BCL10 and subsequent recruitment of MALT1: this leads to activation of NF-kappa-B and MAP kinase p38 (MAPK11, MAPK12, MAPK13 and/or MAPK14) pathways which stimulate expression of genes encoding pro-inflammatory cytokines and chemokines (PubMed:11053425, PubMed:26488816, PubMed:26961233, PubMed:31296852, PubMed:33558980). CARD9 signaling in antigen-presenting cells links innate sensing of fungi to the activation of adaptive immunity and provides a cytokine milieu that induces the development and subsequent of interleukin 17-producing T helper (Th17) cells (PubMed:24231284). Also involved in activation of myeloid cells via classical ITAM-associated receptors and TLR: required for TLR-mediated activation of MAPK, while it is not required for TLR-induced activation of NF-kappa-B (By similarity). CARD9 can also be engaged independently of BCL10: forms a complex with RASGRF1 downstream of C-type lectin receptors, which recruits and activates HRAS, leading to ERK activation and the production of cytokines (By similarity). Acts as an important regulator of the intestinal commensal fungi (mycobiota) component of the gut microbiota (PubMed:33548172). Plays an essential role in antifungal immunity against dissemination of gut fungi: acts by promoting induction of antifungal IgG antibodies response in CX3CR1(+) macrophages to confer protection against disseminated C.albicans or C.auris infection (PubMed:33548172). Also mediates immunity against other pathogens, such as certain bacteria, viruses and parasites; CARD9 signaling is however redundant with other innate immune responses (By similarity). In response to L.monocytogenes infection, required for the production of inflammatory cytokines activated by intracellular peptidoglycan: acts by connecting NOD2 recognition of peptidoglycan to downstream activation of MAP kinases (MAPK) without activating NF-kappa-B (By similarity).</text>
</comment>
<comment type="activity regulation">
    <text evidence="20 31 32">Maintained in an autoinhibited state via homodimerization in which the CARD domain forms an extensive interaction with the adjacent linker and coiled-coil regions (PubMed:31296852). Activation downstream of C-type lectin receptors, by phosphorylation by PRKCD and/or ubiquitination by TRIM62, triggers disruption of the CARD domain-coiled coil interface, CARD9 homooligomerization and BCL10 recruitment, followed by activation of NF-kappa-B and MAP kinase p38 pathways (PubMed:26488816, PubMed:31296852). Zinc-binding inhibits activation by stabilizing the CARD ground-state conformation and restricting its capacity to form BCL10-nucleating filaments (PubMed:30206119).</text>
</comment>
<comment type="subunit">
    <text evidence="1 2 6 13 20 21 31 32">Monomer (PubMed:30206119). Homodimer; homodimerization is mediated by the CARD domain which forms an extensive interaction with the adjacent linker and coiled-coil regions; leads to an autoinhibited state (PubMed:30206119, PubMed:31296852). Homomultimer; polymerizes following activation, forming a nucleating helical template that seeds BCL10-filament formation via a CARD-CARD interaction (PubMed:31296852). Interacts (via CARD domain) with BCL10 (via CARD domain); interaction takes place following CARD9 activation and polymerization, leading to the formation of a filamentous CBM complex assembly (PubMed:11053425, PubMed:26488816, PubMed:26521038, PubMed:31296852). Component of a CBM complex (CARD9-BCL10, MALT1), composed of CARD9, BCL10 and MALT1 (PubMed:26521038). Interacts with RASGRF1 (PubMed:26521038). Interacts with NOD2 (via NACHT domain); interaction is direct (PubMed:24960071). Interacts with RIPK2 (By similarity). Interacts with VHL; without leading to protein degradation (By similarity).</text>
</comment>
<comment type="interaction">
    <interactant intactId="EBI-751319">
        <id>Q9H257</id>
    </interactant>
    <interactant intactId="EBI-487024">
        <id>O14639</id>
        <label>ABLIM1</label>
    </interactant>
    <organismsDiffer>false</organismsDiffer>
    <experiments>3</experiments>
</comment>
<comment type="interaction">
    <interactant intactId="EBI-751319">
        <id>Q9H257</id>
    </interactant>
    <interactant intactId="EBI-10187270">
        <id>Q9Y2J4-4</id>
        <label>AMOTL2</label>
    </interactant>
    <organismsDiffer>false</organismsDiffer>
    <experiments>5</experiments>
</comment>
<comment type="interaction">
    <interactant intactId="EBI-751319">
        <id>Q9H257</id>
    </interactant>
    <interactant intactId="EBI-958922">
        <id>O95999</id>
        <label>BCL10</label>
    </interactant>
    <organismsDiffer>false</organismsDiffer>
    <experiments>6</experiments>
</comment>
<comment type="interaction">
    <interactant intactId="EBI-751319">
        <id>Q9H257</id>
    </interactant>
    <interactant intactId="EBI-2548012">
        <id>Q9H2G9</id>
        <label>BLZF1</label>
    </interactant>
    <organismsDiffer>false</organismsDiffer>
    <experiments>3</experiments>
</comment>
<comment type="interaction">
    <interactant intactId="EBI-751319">
        <id>Q9H257</id>
    </interactant>
    <interactant intactId="EBI-946029">
        <id>Q6P1W5</id>
        <label>C1orf94</label>
    </interactant>
    <organismsDiffer>false</organismsDiffer>
    <experiments>3</experiments>
</comment>
<comment type="interaction">
    <interactant intactId="EBI-751319">
        <id>Q9H257</id>
    </interactant>
    <interactant intactId="EBI-739879">
        <id>Q53TS8</id>
        <label>C2CD6</label>
    </interactant>
    <organismsDiffer>false</organismsDiffer>
    <experiments>3</experiments>
</comment>
<comment type="interaction">
    <interactant intactId="EBI-751319">
        <id>Q9H257</id>
    </interactant>
    <interactant intactId="EBI-10175300">
        <id>Q8TD31-3</id>
        <label>CCHCR1</label>
    </interactant>
    <organismsDiffer>false</organismsDiffer>
    <experiments>3</experiments>
</comment>
<comment type="interaction">
    <interactant intactId="EBI-751319">
        <id>Q9H257</id>
    </interactant>
    <interactant intactId="EBI-5278764">
        <id>Q96GN5</id>
        <label>CDCA7L</label>
    </interactant>
    <organismsDiffer>false</organismsDiffer>
    <experiments>4</experiments>
</comment>
<comment type="interaction">
    <interactant intactId="EBI-751319">
        <id>Q9H257</id>
    </interactant>
    <interactant intactId="EBI-10181988">
        <id>Q8IYX8-2</id>
        <label>CEP57L1</label>
    </interactant>
    <organismsDiffer>false</organismsDiffer>
    <experiments>3</experiments>
</comment>
<comment type="interaction">
    <interactant intactId="EBI-751319">
        <id>Q9H257</id>
    </interactant>
    <interactant intactId="EBI-739624">
        <id>Q8NHQ1</id>
        <label>CEP70</label>
    </interactant>
    <organismsDiffer>false</organismsDiffer>
    <experiments>3</experiments>
</comment>
<comment type="interaction">
    <interactant intactId="EBI-751319">
        <id>Q9H257</id>
    </interactant>
    <interactant intactId="EBI-5453285">
        <id>Q2TBE0</id>
        <label>CWF19L2</label>
    </interactant>
    <organismsDiffer>false</organismsDiffer>
    <experiments>3</experiments>
</comment>
<comment type="interaction">
    <interactant intactId="EBI-751319">
        <id>Q9H257</id>
    </interactant>
    <interactant intactId="EBI-77321">
        <id>Q9UER7</id>
        <label>DAXX</label>
    </interactant>
    <organismsDiffer>false</organismsDiffer>
    <experiments>3</experiments>
</comment>
<comment type="interaction">
    <interactant intactId="EBI-751319">
        <id>Q9H257</id>
    </interactant>
    <interactant intactId="EBI-749800">
        <id>Q9UII6</id>
        <label>DUSP13B</label>
    </interactant>
    <organismsDiffer>false</organismsDiffer>
    <experiments>3</experiments>
</comment>
<comment type="interaction">
    <interactant intactId="EBI-751319">
        <id>Q9H257</id>
    </interactant>
    <interactant intactId="EBI-398610">
        <id>O60573</id>
        <label>EIF4E2</label>
    </interactant>
    <organismsDiffer>false</organismsDiffer>
    <experiments>3</experiments>
</comment>
<comment type="interaction">
    <interactant intactId="EBI-751319">
        <id>Q9H257</id>
    </interactant>
    <interactant intactId="EBI-741626">
        <id>Q9H5Z6</id>
        <label>FAM124B</label>
    </interactant>
    <organismsDiffer>false</organismsDiffer>
    <experiments>3</experiments>
</comment>
<comment type="interaction">
    <interactant intactId="EBI-751319">
        <id>Q9H257</id>
    </interactant>
    <interactant intactId="EBI-719941">
        <id>Q3B820</id>
        <label>FAM161A</label>
    </interactant>
    <organismsDiffer>false</organismsDiffer>
    <experiments>4</experiments>
</comment>
<comment type="interaction">
    <interactant intactId="EBI-751319">
        <id>Q9H257</id>
    </interactant>
    <interactant intactId="EBI-742802">
        <id>Q9Y247</id>
        <label>FAM50B</label>
    </interactant>
    <organismsDiffer>false</organismsDiffer>
    <experiments>3</experiments>
</comment>
<comment type="interaction">
    <interactant intactId="EBI-751319">
        <id>Q9H257</id>
    </interactant>
    <interactant intactId="EBI-2549423">
        <id>Q6NT76</id>
        <label>HMBOX1</label>
    </interactant>
    <organismsDiffer>false</organismsDiffer>
    <experiments>3</experiments>
</comment>
<comment type="interaction">
    <interactant intactId="EBI-751319">
        <id>Q9H257</id>
    </interactant>
    <interactant intactId="EBI-8638439">
        <id>Q8IYA8</id>
        <label>IHO1</label>
    </interactant>
    <organismsDiffer>false</organismsDiffer>
    <experiments>3</experiments>
</comment>
<comment type="interaction">
    <interactant intactId="EBI-751319">
        <id>Q9H257</id>
    </interactant>
    <interactant intactId="EBI-4397613">
        <id>Q7L273</id>
        <label>KCTD9</label>
    </interactant>
    <organismsDiffer>false</organismsDiffer>
    <experiments>3</experiments>
</comment>
<comment type="interaction">
    <interactant intactId="EBI-751319">
        <id>Q9H257</id>
    </interactant>
    <interactant intactId="EBI-742756">
        <id>P08727</id>
        <label>KRT19</label>
    </interactant>
    <organismsDiffer>false</organismsDiffer>
    <experiments>4</experiments>
</comment>
<comment type="interaction">
    <interactant intactId="EBI-751319">
        <id>Q9H257</id>
    </interactant>
    <interactant intactId="EBI-948001">
        <id>Q15323</id>
        <label>KRT31</label>
    </interactant>
    <organismsDiffer>false</organismsDiffer>
    <experiments>3</experiments>
</comment>
<comment type="interaction">
    <interactant intactId="EBI-751319">
        <id>Q9H257</id>
    </interactant>
    <interactant intactId="EBI-10171697">
        <id>Q6A162</id>
        <label>KRT40</label>
    </interactant>
    <organismsDiffer>false</organismsDiffer>
    <experiments>3</experiments>
</comment>
<comment type="interaction">
    <interactant intactId="EBI-751319">
        <id>Q9H257</id>
    </interactant>
    <interactant intactId="EBI-10172150">
        <id>P60370</id>
        <label>KRTAP10-5</label>
    </interactant>
    <organismsDiffer>false</organismsDiffer>
    <experiments>3</experiments>
</comment>
<comment type="interaction">
    <interactant intactId="EBI-751319">
        <id>Q9H257</id>
    </interactant>
    <interactant intactId="EBI-726510">
        <id>Q96BZ8</id>
        <label>LENG1</label>
    </interactant>
    <organismsDiffer>false</organismsDiffer>
    <experiments>3</experiments>
</comment>
<comment type="interaction">
    <interactant intactId="EBI-751319">
        <id>Q9H257</id>
    </interactant>
    <interactant intactId="EBI-8639312">
        <id>P25800</id>
        <label>LMO1</label>
    </interactant>
    <organismsDiffer>false</organismsDiffer>
    <experiments>3</experiments>
</comment>
<comment type="interaction">
    <interactant intactId="EBI-751319">
        <id>Q9H257</id>
    </interactant>
    <interactant intactId="EBI-741037">
        <id>Q9BRK4</id>
        <label>LZTS2</label>
    </interactant>
    <organismsDiffer>false</organismsDiffer>
    <experiments>3</experiments>
</comment>
<comment type="interaction">
    <interactant intactId="EBI-751319">
        <id>Q9H257</id>
    </interactant>
    <interactant intactId="EBI-748397">
        <id>P50222</id>
        <label>MEOX2</label>
    </interactant>
    <organismsDiffer>false</organismsDiffer>
    <experiments>3</experiments>
</comment>
<comment type="interaction">
    <interactant intactId="EBI-751319">
        <id>Q9H257</id>
    </interactant>
    <interactant intactId="EBI-1048159">
        <id>P55081</id>
        <label>MFAP1</label>
    </interactant>
    <organismsDiffer>false</organismsDiffer>
    <experiments>3</experiments>
</comment>
<comment type="interaction">
    <interactant intactId="EBI-751319">
        <id>Q9H257</id>
    </interactant>
    <interactant intactId="EBI-10172876">
        <id>Q7Z6G3-2</id>
        <label>NECAB2</label>
    </interactant>
    <organismsDiffer>false</organismsDiffer>
    <experiments>3</experiments>
</comment>
<comment type="interaction">
    <interactant intactId="EBI-751319">
        <id>Q9H257</id>
    </interactant>
    <interactant intactId="EBI-741896">
        <id>Q9P286</id>
        <label>PAK5</label>
    </interactant>
    <organismsDiffer>false</organismsDiffer>
    <experiments>5</experiments>
</comment>
<comment type="interaction">
    <interactant intactId="EBI-751319">
        <id>Q9H257</id>
    </interactant>
    <interactant intactId="EBI-348489">
        <id>P40425</id>
        <label>PBX2</label>
    </interactant>
    <organismsDiffer>false</organismsDiffer>
    <experiments>3</experiments>
</comment>
<comment type="interaction">
    <interactant intactId="EBI-751319">
        <id>Q9H257</id>
    </interactant>
    <interactant intactId="EBI-713786">
        <id>Q8IXK0</id>
        <label>PHC2</label>
    </interactant>
    <organismsDiffer>false</organismsDiffer>
    <experiments>3</experiments>
</comment>
<comment type="interaction">
    <interactant intactId="EBI-751319">
        <id>Q9H257</id>
    </interactant>
    <interactant intactId="EBI-10171633">
        <id>Q96PV4</id>
        <label>PNMA5</label>
    </interactant>
    <organismsDiffer>false</organismsDiffer>
    <experiments>3</experiments>
</comment>
<comment type="interaction">
    <interactant intactId="EBI-751319">
        <id>Q9H257</id>
    </interactant>
    <interactant intactId="EBI-2557469">
        <id>Q6NYC8</id>
        <label>PPP1R18</label>
    </interactant>
    <organismsDiffer>false</organismsDiffer>
    <experiments>4</experiments>
</comment>
<comment type="interaction">
    <interactant intactId="EBI-751319">
        <id>Q9H257</id>
    </interactant>
    <interactant intactId="EBI-10217913">
        <id>Q14D33</id>
        <label>RTP5</label>
    </interactant>
    <organismsDiffer>false</organismsDiffer>
    <experiments>3</experiments>
</comment>
<comment type="interaction">
    <interactant intactId="EBI-751319">
        <id>Q9H257</id>
    </interactant>
    <interactant intactId="EBI-2212028">
        <id>Q9Y2D8</id>
        <label>SSX2IP</label>
    </interactant>
    <organismsDiffer>false</organismsDiffer>
    <experiments>3</experiments>
</comment>
<comment type="interaction">
    <interactant intactId="EBI-751319">
        <id>Q9H257</id>
    </interactant>
    <interactant intactId="EBI-714135">
        <id>O75558</id>
        <label>STX11</label>
    </interactant>
    <organismsDiffer>false</organismsDiffer>
    <experiments>3</experiments>
</comment>
<comment type="interaction">
    <interactant intactId="EBI-751319">
        <id>Q9H257</id>
    </interactant>
    <interactant intactId="EBI-80140">
        <id>P63165</id>
        <label>SUMO1</label>
    </interactant>
    <organismsDiffer>false</organismsDiffer>
    <experiments>3</experiments>
</comment>
<comment type="interaction">
    <interactant intactId="EBI-751319">
        <id>Q9H257</id>
    </interactant>
    <interactant intactId="EBI-10172380">
        <id>Q5VWN6-2</id>
        <label>TASOR2</label>
    </interactant>
    <organismsDiffer>false</organismsDiffer>
    <experiments>3</experiments>
</comment>
<comment type="interaction">
    <interactant intactId="EBI-751319">
        <id>Q9H257</id>
    </interactant>
    <interactant intactId="EBI-954696">
        <id>Q8N8B7</id>
        <label>TCEANC</label>
    </interactant>
    <organismsDiffer>false</organismsDiffer>
    <experiments>3</experiments>
</comment>
<comment type="interaction">
    <interactant intactId="EBI-751319">
        <id>Q9H257</id>
    </interactant>
    <interactant intactId="EBI-749995">
        <id>P56279</id>
        <label>TCL1A</label>
    </interactant>
    <organismsDiffer>false</organismsDiffer>
    <experiments>3</experiments>
</comment>
<comment type="interaction">
    <interactant intactId="EBI-751319">
        <id>Q9H257</id>
    </interactant>
    <interactant intactId="EBI-1105213">
        <id>Q9UBB9</id>
        <label>TFIP11</label>
    </interactant>
    <organismsDiffer>false</organismsDiffer>
    <experiments>3</experiments>
</comment>
<comment type="interaction">
    <interactant intactId="EBI-751319">
        <id>Q9H257</id>
    </interactant>
    <interactant intactId="EBI-717810">
        <id>Q08117</id>
        <label>TLE5</label>
    </interactant>
    <organismsDiffer>false</organismsDiffer>
    <experiments>4</experiments>
</comment>
<comment type="interaction">
    <interactant intactId="EBI-751319">
        <id>Q9H257</id>
    </interactant>
    <interactant intactId="EBI-2505861">
        <id>Q13829</id>
        <label>TNFAIP1</label>
    </interactant>
    <organismsDiffer>false</organismsDiffer>
    <experiments>3</experiments>
</comment>
<comment type="interaction">
    <interactant intactId="EBI-751319">
        <id>Q9H257</id>
    </interactant>
    <interactant intactId="EBI-740098">
        <id>P36406</id>
        <label>TRIM23</label>
    </interactant>
    <organismsDiffer>false</organismsDiffer>
    <experiments>4</experiments>
</comment>
<comment type="interaction">
    <interactant intactId="EBI-751319">
        <id>Q9H257</id>
    </interactant>
    <interactant intactId="EBI-702370">
        <id>Q14134</id>
        <label>TRIM29</label>
    </interactant>
    <organismsDiffer>false</organismsDiffer>
    <experiments>3</experiments>
</comment>
<comment type="interaction">
    <interactant intactId="EBI-751319">
        <id>Q9H257</id>
    </interactant>
    <interactant intactId="EBI-5235829">
        <id>Q8IWZ5</id>
        <label>TRIM42</label>
    </interactant>
    <organismsDiffer>false</organismsDiffer>
    <experiments>3</experiments>
</comment>
<comment type="interaction">
    <interactant intactId="EBI-751319">
        <id>Q9H257</id>
    </interactant>
    <interactant intactId="EBI-2130429">
        <id>Q9BYV2</id>
        <label>TRIM54</label>
    </interactant>
    <organismsDiffer>false</organismsDiffer>
    <experiments>3</experiments>
</comment>
<comment type="interaction">
    <interactant intactId="EBI-751319">
        <id>Q9H257</id>
    </interactant>
    <interactant intactId="EBI-21353855">
        <id>Q99598</id>
        <label>TSNAX</label>
    </interactant>
    <organismsDiffer>false</organismsDiffer>
    <experiments>5</experiments>
</comment>
<comment type="interaction">
    <interactant intactId="EBI-751319">
        <id>Q9H257</id>
    </interactant>
    <interactant intactId="EBI-1043104">
        <id>Q9Y4E8</id>
        <label>USP15</label>
    </interactant>
    <organismsDiffer>false</organismsDiffer>
    <experiments>4</experiments>
</comment>
<comment type="interaction">
    <interactant intactId="EBI-751319">
        <id>Q9H257</id>
    </interactant>
    <interactant intactId="EBI-10243107">
        <id>Q548N1</id>
        <label>VPS28</label>
    </interactant>
    <organismsDiffer>false</organismsDiffer>
    <experiments>3</experiments>
</comment>
<comment type="interaction">
    <interactant intactId="EBI-751319">
        <id>Q9H257</id>
    </interactant>
    <interactant intactId="EBI-7265024">
        <id>Q8N3Z6</id>
        <label>ZCCHC7</label>
    </interactant>
    <organismsDiffer>false</organismsDiffer>
    <experiments>3</experiments>
</comment>
<comment type="interaction">
    <interactant intactId="EBI-751319">
        <id>Q9H257</id>
    </interactant>
    <interactant intactId="EBI-10177272">
        <id>P15622-3</id>
        <label>ZNF250</label>
    </interactant>
    <organismsDiffer>false</organismsDiffer>
    <experiments>3</experiments>
</comment>
<comment type="interaction">
    <interactant intactId="EBI-751319">
        <id>Q9H257</id>
    </interactant>
    <interactant intactId="EBI-740727">
        <id>Q8TAU3</id>
        <label>ZNF417</label>
    </interactant>
    <organismsDiffer>false</organismsDiffer>
    <experiments>3</experiments>
</comment>
<comment type="interaction">
    <interactant intactId="EBI-751319">
        <id>Q9H257</id>
    </interactant>
    <interactant intactId="EBI-10172590">
        <id>Q7Z3I7</id>
        <label>ZNF572</label>
    </interactant>
    <organismsDiffer>false</organismsDiffer>
    <experiments>7</experiments>
</comment>
<comment type="interaction">
    <interactant intactId="EBI-751319">
        <id>Q9H257</id>
    </interactant>
    <interactant intactId="EBI-6427977">
        <id>Q96SQ5</id>
        <label>ZNF587</label>
    </interactant>
    <organismsDiffer>false</organismsDiffer>
    <experiments>3</experiments>
</comment>
<comment type="interaction">
    <interactant intactId="EBI-751319">
        <id>Q9H257</id>
    </interactant>
    <interactant intactId="EBI-625509">
        <id>Q8N720</id>
        <label>ZNF655</label>
    </interactant>
    <organismsDiffer>false</organismsDiffer>
    <experiments>3</experiments>
</comment>
<comment type="interaction">
    <interactant intactId="EBI-751319">
        <id>Q9H257</id>
    </interactant>
    <interactant intactId="EBI-10174671">
        <id>A8K932</id>
    </interactant>
    <organismsDiffer>false</organismsDiffer>
    <experiments>3</experiments>
</comment>
<comment type="interaction">
    <interactant intactId="EBI-751319">
        <id>Q9H257</id>
    </interactant>
    <interactant intactId="EBI-25492395">
        <id>PRO_0000449633</id>
        <label>rep</label>
        <dbReference type="UniProtKB" id="P0DTD1"/>
    </interactant>
    <organismsDiffer>true</organismsDiffer>
    <experiments>3</experiments>
</comment>
<comment type="interaction">
    <interactant intactId="EBI-11530605">
        <id>Q9H257-2</id>
    </interactant>
    <interactant intactId="EBI-746752">
        <id>Q9Y2J4</id>
        <label>AMOTL2</label>
    </interactant>
    <organismsDiffer>false</organismsDiffer>
    <experiments>3</experiments>
</comment>
<comment type="interaction">
    <interactant intactId="EBI-11530605">
        <id>Q9H257-2</id>
    </interactant>
    <interactant intactId="EBI-11954292">
        <id>Q86V38</id>
        <label>ATN1</label>
    </interactant>
    <organismsDiffer>false</organismsDiffer>
    <experiments>3</experiments>
</comment>
<comment type="interaction">
    <interactant intactId="EBI-11530605">
        <id>Q9H257-2</id>
    </interactant>
    <interactant intactId="EBI-710484">
        <id>O15169</id>
        <label>AXIN1</label>
    </interactant>
    <organismsDiffer>false</organismsDiffer>
    <experiments>3</experiments>
</comment>
<comment type="interaction">
    <interactant intactId="EBI-11530605">
        <id>Q9H257-2</id>
    </interactant>
    <interactant intactId="EBI-12011224">
        <id>Q9NPB3</id>
        <label>CABP2</label>
    </interactant>
    <organismsDiffer>false</organismsDiffer>
    <experiments>3</experiments>
</comment>
<comment type="interaction">
    <interactant intactId="EBI-11530605">
        <id>Q9H257-2</id>
    </interactant>
    <interactant intactId="EBI-3866279">
        <id>Q9BWT7</id>
        <label>CARD10</label>
    </interactant>
    <organismsDiffer>false</organismsDiffer>
    <experiments>3</experiments>
</comment>
<comment type="interaction">
    <interactant intactId="EBI-11530605">
        <id>Q9H257-2</id>
    </interactant>
    <interactant intactId="EBI-11530605">
        <id>Q9H257-2</id>
        <label>CARD9</label>
    </interactant>
    <organismsDiffer>false</organismsDiffer>
    <experiments>3</experiments>
</comment>
<comment type="interaction">
    <interactant intactId="EBI-11530605">
        <id>Q9H257-2</id>
    </interactant>
    <interactant intactId="EBI-712912">
        <id>Q9HC52</id>
        <label>CBX8</label>
    </interactant>
    <organismsDiffer>false</organismsDiffer>
    <experiments>3</experiments>
</comment>
<comment type="interaction">
    <interactant intactId="EBI-11530605">
        <id>Q9H257-2</id>
    </interactant>
    <interactant intactId="EBI-744556">
        <id>Q96HB5</id>
        <label>CCDC120</label>
    </interactant>
    <organismsDiffer>false</organismsDiffer>
    <experiments>3</experiments>
</comment>
<comment type="interaction">
    <interactant intactId="EBI-11530605">
        <id>Q9H257-2</id>
    </interactant>
    <interactant intactId="EBI-10961312">
        <id>Q8IYE1</id>
        <label>CCDC13</label>
    </interactant>
    <organismsDiffer>false</organismsDiffer>
    <experiments>3</experiments>
</comment>
<comment type="interaction">
    <interactant intactId="EBI-11530605">
        <id>Q9H257-2</id>
    </interactant>
    <interactant intactId="EBI-347573">
        <id>A6NC98</id>
        <label>CCDC88B</label>
    </interactant>
    <organismsDiffer>false</organismsDiffer>
    <experiments>3</experiments>
</comment>
<comment type="interaction">
    <interactant intactId="EBI-11530605">
        <id>Q9H257-2</id>
    </interactant>
    <interactant intactId="EBI-295634">
        <id>Q16543</id>
        <label>CDC37</label>
    </interactant>
    <organismsDiffer>false</organismsDiffer>
    <experiments>3</experiments>
</comment>
<comment type="interaction">
    <interactant intactId="EBI-11530605">
        <id>Q9H257-2</id>
    </interactant>
    <interactant intactId="EBI-1052532">
        <id>O14519</id>
        <label>CDK2AP1</label>
    </interactant>
    <organismsDiffer>false</organismsDiffer>
    <experiments>3</experiments>
</comment>
<comment type="interaction">
    <interactant intactId="EBI-11530605">
        <id>Q9H257-2</id>
    </interactant>
    <interactant intactId="EBI-12093053">
        <id>O43247-2</id>
        <label>CIMIP4</label>
    </interactant>
    <organismsDiffer>false</organismsDiffer>
    <experiments>3</experiments>
</comment>
<comment type="interaction">
    <interactant intactId="EBI-11530605">
        <id>Q9H257-2</id>
    </interactant>
    <interactant intactId="EBI-5453285">
        <id>Q2TBE0</id>
        <label>CWF19L2</label>
    </interactant>
    <organismsDiffer>false</organismsDiffer>
    <experiments>3</experiments>
</comment>
<comment type="interaction">
    <interactant intactId="EBI-11530605">
        <id>Q9H257-2</id>
    </interactant>
    <interactant intactId="EBI-3867333">
        <id>A8MQ03</id>
        <label>CYSRT1</label>
    </interactant>
    <organismsDiffer>false</organismsDiffer>
    <experiments>3</experiments>
</comment>
<comment type="interaction">
    <interactant intactId="EBI-11530605">
        <id>Q9H257-2</id>
    </interactant>
    <interactant intactId="EBI-742054">
        <id>Q96D03</id>
        <label>DDIT4L</label>
    </interactant>
    <organismsDiffer>false</organismsDiffer>
    <experiments>3</experiments>
</comment>
<comment type="interaction">
    <interactant intactId="EBI-11530605">
        <id>Q9H257-2</id>
    </interactant>
    <interactant intactId="EBI-11988027">
        <id>Q9NRI5-2</id>
        <label>DISC1</label>
    </interactant>
    <organismsDiffer>false</organismsDiffer>
    <experiments>3</experiments>
</comment>
<comment type="interaction">
    <interactant intactId="EBI-11530605">
        <id>Q9H257-2</id>
    </interactant>
    <interactant intactId="EBI-749800">
        <id>Q9UII6</id>
        <label>DUSP13B</label>
    </interactant>
    <organismsDiffer>false</organismsDiffer>
    <experiments>8</experiments>
</comment>
<comment type="interaction">
    <interactant intactId="EBI-11530605">
        <id>Q9H257-2</id>
    </interactant>
    <interactant intactId="EBI-2349927">
        <id>Q5JST6</id>
        <label>EFHC2</label>
    </interactant>
    <organismsDiffer>false</organismsDiffer>
    <experiments>3</experiments>
</comment>
<comment type="interaction">
    <interactant intactId="EBI-11530605">
        <id>Q9H257-2</id>
    </interactant>
    <interactant intactId="EBI-299104">
        <id>P38919</id>
        <label>EIF4A3</label>
    </interactant>
    <organismsDiffer>false</organismsDiffer>
    <experiments>3</experiments>
</comment>
<comment type="interaction">
    <interactant intactId="EBI-11530605">
        <id>Q9H257-2</id>
    </interactant>
    <interactant intactId="EBI-719941">
        <id>Q3B820</id>
        <label>FAM161A</label>
    </interactant>
    <organismsDiffer>false</organismsDiffer>
    <experiments>6</experiments>
</comment>
<comment type="interaction">
    <interactant intactId="EBI-11530605">
        <id>Q9H257-2</id>
    </interactant>
    <interactant intactId="EBI-7225287">
        <id>Q96MY7</id>
        <label>FAM161B</label>
    </interactant>
    <organismsDiffer>false</organismsDiffer>
    <experiments>3</experiments>
</comment>
<comment type="interaction">
    <interactant intactId="EBI-11530605">
        <id>Q9H257-2</id>
    </interactant>
    <interactant intactId="EBI-6658203">
        <id>Q86YD7</id>
        <label>FAM90A1</label>
    </interactant>
    <organismsDiffer>false</organismsDiffer>
    <experiments>3</experiments>
</comment>
<comment type="interaction">
    <interactant intactId="EBI-11530605">
        <id>Q9H257-2</id>
    </interactant>
    <interactant intactId="EBI-11320806">
        <id>Q9NU39</id>
        <label>FOXD4L1</label>
    </interactant>
    <organismsDiffer>false</organismsDiffer>
    <experiments>3</experiments>
</comment>
<comment type="interaction">
    <interactant intactId="EBI-11530605">
        <id>Q9H257-2</id>
    </interactant>
    <interactant intactId="EBI-1052570">
        <id>O95995</id>
        <label>GAS8</label>
    </interactant>
    <organismsDiffer>false</organismsDiffer>
    <experiments>3</experiments>
</comment>
<comment type="interaction">
    <interactant intactId="EBI-11530605">
        <id>Q9H257-2</id>
    </interactant>
    <interactant intactId="EBI-744104">
        <id>P55040</id>
        <label>GEM</label>
    </interactant>
    <organismsDiffer>false</organismsDiffer>
    <experiments>3</experiments>
</comment>
<comment type="interaction">
    <interactant intactId="EBI-11530605">
        <id>Q9H257-2</id>
    </interactant>
    <interactant intactId="EBI-3893317">
        <id>P09067</id>
        <label>HOXB5</label>
    </interactant>
    <organismsDiffer>false</organismsDiffer>
    <experiments>3</experiments>
</comment>
<comment type="interaction">
    <interactant intactId="EBI-11530605">
        <id>Q9H257-2</id>
    </interactant>
    <interactant intactId="EBI-7116203">
        <id>O75031</id>
        <label>HSF2BP</label>
    </interactant>
    <organismsDiffer>false</organismsDiffer>
    <experiments>3</experiments>
</comment>
<comment type="interaction">
    <interactant intactId="EBI-11530605">
        <id>Q9H257-2</id>
    </interactant>
    <interactant intactId="EBI-8638439">
        <id>Q8IYA8</id>
        <label>IHO1</label>
    </interactant>
    <organismsDiffer>false</organismsDiffer>
    <experiments>3</experiments>
</comment>
<comment type="interaction">
    <interactant intactId="EBI-11530605">
        <id>Q9H257-2</id>
    </interactant>
    <interactant intactId="EBI-747204">
        <id>Q9UKT9</id>
        <label>IKZF3</label>
    </interactant>
    <organismsDiffer>false</organismsDiffer>
    <experiments>3</experiments>
</comment>
<comment type="interaction">
    <interactant intactId="EBI-11530605">
        <id>Q9H257-2</id>
    </interactant>
    <interactant intactId="EBI-715611">
        <id>Q9C086</id>
        <label>INO80B</label>
    </interactant>
    <organismsDiffer>false</organismsDiffer>
    <experiments>3</experiments>
</comment>
<comment type="interaction">
    <interactant intactId="EBI-11530605">
        <id>Q9H257-2</id>
    </interactant>
    <interactant intactId="EBI-2556193">
        <id>Q63ZY3</id>
        <label>KANK2</label>
    </interactant>
    <organismsDiffer>false</organismsDiffer>
    <experiments>3</experiments>
</comment>
<comment type="interaction">
    <interactant intactId="EBI-11530605">
        <id>Q9H257-2</id>
    </interactant>
    <interactant intactId="EBI-3437878">
        <id>Q86T90</id>
        <label>KIAA1328</label>
    </interactant>
    <organismsDiffer>false</organismsDiffer>
    <experiments>3</experiments>
</comment>
<comment type="interaction">
    <interactant intactId="EBI-11530605">
        <id>Q9H257-2</id>
    </interactant>
    <interactant intactId="EBI-14069005">
        <id>Q9BVG8-5</id>
        <label>KIFC3</label>
    </interactant>
    <organismsDiffer>false</organismsDiffer>
    <experiments>3</experiments>
</comment>
<comment type="interaction">
    <interactant intactId="EBI-11530605">
        <id>Q9H257-2</id>
    </interactant>
    <interactant intactId="EBI-2432309">
        <id>Q92876</id>
        <label>KLK6</label>
    </interactant>
    <organismsDiffer>false</organismsDiffer>
    <experiments>3</experiments>
</comment>
<comment type="interaction">
    <interactant intactId="EBI-11530605">
        <id>Q9H257-2</id>
    </interactant>
    <interactant intactId="EBI-739566">
        <id>P19012</id>
        <label>KRT15</label>
    </interactant>
    <organismsDiffer>false</organismsDiffer>
    <experiments>3</experiments>
</comment>
<comment type="interaction">
    <interactant intactId="EBI-11530605">
        <id>Q9H257-2</id>
    </interactant>
    <interactant intactId="EBI-356410">
        <id>P08779</id>
        <label>KRT16</label>
    </interactant>
    <organismsDiffer>false</organismsDiffer>
    <experiments>3</experiments>
</comment>
<comment type="interaction">
    <interactant intactId="EBI-11530605">
        <id>Q9H257-2</id>
    </interactant>
    <interactant intactId="EBI-2949715">
        <id>O95678</id>
        <label>KRT75</label>
    </interactant>
    <organismsDiffer>false</organismsDiffer>
    <experiments>3</experiments>
</comment>
<comment type="interaction">
    <interactant intactId="EBI-11530605">
        <id>Q9H257-2</id>
    </interactant>
    <interactant intactId="EBI-11987425">
        <id>Q6L8G8</id>
        <label>KRTAP5-7</label>
    </interactant>
    <organismsDiffer>false</organismsDiffer>
    <experiments>3</experiments>
</comment>
<comment type="interaction">
    <interactant intactId="EBI-11530605">
        <id>Q9H257-2</id>
    </interactant>
    <interactant intactId="EBI-739909">
        <id>Q969R5</id>
        <label>L3MBTL2</label>
    </interactant>
    <organismsDiffer>false</organismsDiffer>
    <experiments>3</experiments>
</comment>
<comment type="interaction">
    <interactant intactId="EBI-11530605">
        <id>Q9H257-2</id>
    </interactant>
    <interactant intactId="EBI-726510">
        <id>Q96BZ8</id>
        <label>LENG1</label>
    </interactant>
    <organismsDiffer>false</organismsDiffer>
    <experiments>3</experiments>
</comment>
<comment type="interaction">
    <interactant intactId="EBI-11530605">
        <id>Q9H257-2</id>
    </interactant>
    <interactant intactId="EBI-11742507">
        <id>Q8TAP4-4</id>
        <label>LMO3</label>
    </interactant>
    <organismsDiffer>false</organismsDiffer>
    <experiments>3</experiments>
</comment>
<comment type="interaction">
    <interactant intactId="EBI-11530605">
        <id>Q9H257-2</id>
    </interactant>
    <interactant intactId="EBI-739832">
        <id>Q8TBB1</id>
        <label>LNX1</label>
    </interactant>
    <organismsDiffer>false</organismsDiffer>
    <experiments>3</experiments>
</comment>
<comment type="interaction">
    <interactant intactId="EBI-11530605">
        <id>Q9H257-2</id>
    </interactant>
    <interactant intactId="EBI-1216080">
        <id>Q9Y250</id>
        <label>LZTS1</label>
    </interactant>
    <organismsDiffer>false</organismsDiffer>
    <experiments>3</experiments>
</comment>
<comment type="interaction">
    <interactant intactId="EBI-11530605">
        <id>Q9H257-2</id>
    </interactant>
    <interactant intactId="EBI-348259">
        <id>Q96EZ8</id>
        <label>MCRS1</label>
    </interactant>
    <organismsDiffer>false</organismsDiffer>
    <experiments>3</experiments>
</comment>
<comment type="interaction">
    <interactant intactId="EBI-11530605">
        <id>Q9H257-2</id>
    </interactant>
    <interactant intactId="EBI-16439278">
        <id>Q6FHY5</id>
        <label>MEOX2</label>
    </interactant>
    <organismsDiffer>false</organismsDiffer>
    <experiments>3</experiments>
</comment>
<comment type="interaction">
    <interactant intactId="EBI-11530605">
        <id>Q9H257-2</id>
    </interactant>
    <interactant intactId="EBI-1048159">
        <id>P55081</id>
        <label>MFAP1</label>
    </interactant>
    <organismsDiffer>false</organismsDiffer>
    <experiments>3</experiments>
</comment>
<comment type="interaction">
    <interactant intactId="EBI-11530605">
        <id>Q9H257-2</id>
    </interactant>
    <interactant intactId="EBI-10172526">
        <id>Q9UJV3-2</id>
        <label>MID2</label>
    </interactant>
    <organismsDiffer>false</organismsDiffer>
    <experiments>3</experiments>
</comment>
<comment type="interaction">
    <interactant intactId="EBI-11530605">
        <id>Q9H257-2</id>
    </interactant>
    <interactant intactId="EBI-7950783">
        <id>Q96JP2</id>
        <label>MYO15B</label>
    </interactant>
    <organismsDiffer>false</organismsDiffer>
    <experiments>3</experiments>
</comment>
<comment type="interaction">
    <interactant intactId="EBI-11530605">
        <id>Q9H257-2</id>
    </interactant>
    <interactant intactId="EBI-741158">
        <id>Q96HA8</id>
        <label>NTAQ1</label>
    </interactant>
    <organismsDiffer>false</organismsDiffer>
    <experiments>3</experiments>
</comment>
<comment type="interaction">
    <interactant intactId="EBI-11530605">
        <id>Q9H257-2</id>
    </interactant>
    <interactant intactId="EBI-741896">
        <id>Q9P286</id>
        <label>PAK5</label>
    </interactant>
    <organismsDiffer>false</organismsDiffer>
    <experiments>3</experiments>
</comment>
<comment type="interaction">
    <interactant intactId="EBI-11530605">
        <id>Q9H257-2</id>
    </interactant>
    <interactant intactId="EBI-14066006">
        <id>Q4G0R1</id>
        <label>PIBF1</label>
    </interactant>
    <organismsDiffer>false</organismsDiffer>
    <experiments>3</experiments>
</comment>
<comment type="interaction">
    <interactant intactId="EBI-11530605">
        <id>Q9H257-2</id>
    </interactant>
    <interactant intactId="EBI-79165">
        <id>Q9NRD5</id>
        <label>PICK1</label>
    </interactant>
    <organismsDiffer>false</organismsDiffer>
    <experiments>3</experiments>
</comment>
<comment type="interaction">
    <interactant intactId="EBI-11530605">
        <id>Q9H257-2</id>
    </interactant>
    <interactant intactId="EBI-10987518">
        <id>Q99959-2</id>
        <label>PKP2</label>
    </interactant>
    <organismsDiffer>false</organismsDiffer>
    <experiments>3</experiments>
</comment>
<comment type="interaction">
    <interactant intactId="EBI-11530605">
        <id>Q9H257-2</id>
    </interactant>
    <interactant intactId="EBI-2557469">
        <id>Q6NYC8</id>
        <label>PPP1R18</label>
    </interactant>
    <organismsDiffer>false</organismsDiffer>
    <experiments>3</experiments>
</comment>
<comment type="interaction">
    <interactant intactId="EBI-11530605">
        <id>Q9H257-2</id>
    </interactant>
    <interactant intactId="EBI-2798416">
        <id>Q99633</id>
        <label>PRPF18</label>
    </interactant>
    <organismsDiffer>false</organismsDiffer>
    <experiments>3</experiments>
</comment>
<comment type="interaction">
    <interactant intactId="EBI-11530605">
        <id>Q9H257-2</id>
    </interactant>
    <interactant intactId="EBI-359310">
        <id>P25789</id>
        <label>PSMA4</label>
    </interactant>
    <organismsDiffer>false</organismsDiffer>
    <experiments>3</experiments>
</comment>
<comment type="interaction">
    <interactant intactId="EBI-11530605">
        <id>Q9H257-2</id>
    </interactant>
    <interactant intactId="EBI-1210429">
        <id>Q9NYW8</id>
        <label>RBAK</label>
    </interactant>
    <organismsDiffer>false</organismsDiffer>
    <experiments>3</experiments>
</comment>
<comment type="interaction">
    <interactant intactId="EBI-11530605">
        <id>Q9H257-2</id>
    </interactant>
    <interactant intactId="EBI-3957636">
        <id>Q8IYX7</id>
        <label>SAXO1</label>
    </interactant>
    <organismsDiffer>false</organismsDiffer>
    <experiments>3</experiments>
</comment>
<comment type="interaction">
    <interactant intactId="EBI-11530605">
        <id>Q9H257-2</id>
    </interactant>
    <interactant intactId="EBI-748391">
        <id>Q9BWG6</id>
        <label>SCNM1</label>
    </interactant>
    <organismsDiffer>false</organismsDiffer>
    <experiments>3</experiments>
</comment>
<comment type="interaction">
    <interactant intactId="EBI-11530605">
        <id>Q9H257-2</id>
    </interactant>
    <interactant intactId="EBI-12037847">
        <id>Q6ZSJ9</id>
        <label>SHISA6</label>
    </interactant>
    <organismsDiffer>false</organismsDiffer>
    <experiments>3</experiments>
</comment>
<comment type="interaction">
    <interactant intactId="EBI-11530605">
        <id>Q9H257-2</id>
    </interactant>
    <interactant intactId="EBI-10269374">
        <id>Q8ND83</id>
        <label>SLAIN1</label>
    </interactant>
    <organismsDiffer>false</organismsDiffer>
    <experiments>3</experiments>
</comment>
<comment type="interaction">
    <interactant intactId="EBI-11530605">
        <id>Q9H257-2</id>
    </interactant>
    <interactant intactId="EBI-17860101">
        <id>Q9NWH7-2</id>
        <label>SPATA6</label>
    </interactant>
    <organismsDiffer>false</organismsDiffer>
    <experiments>3</experiments>
</comment>
<comment type="interaction">
    <interactant intactId="EBI-11530605">
        <id>Q9H257-2</id>
    </interactant>
    <interactant intactId="EBI-725557">
        <id>Q9NZ72</id>
        <label>STMN3</label>
    </interactant>
    <organismsDiffer>false</organismsDiffer>
    <experiments>3</experiments>
</comment>
<comment type="interaction">
    <interactant intactId="EBI-11530605">
        <id>Q9H257-2</id>
    </interactant>
    <interactant intactId="EBI-745958">
        <id>Q5VWN6</id>
        <label>TASOR2</label>
    </interactant>
    <organismsDiffer>false</organismsDiffer>
    <experiments>3</experiments>
</comment>
<comment type="interaction">
    <interactant intactId="EBI-11530605">
        <id>Q9H257-2</id>
    </interactant>
    <interactant intactId="EBI-11955057">
        <id>Q8N8B7-2</id>
        <label>TCEANC</label>
    </interactant>
    <organismsDiffer>false</organismsDiffer>
    <experiments>3</experiments>
</comment>
<comment type="interaction">
    <interactant intactId="EBI-11530605">
        <id>Q9H257-2</id>
    </interactant>
    <interactant intactId="EBI-749995">
        <id>P56279</id>
        <label>TCL1A</label>
    </interactant>
    <organismsDiffer>false</organismsDiffer>
    <experiments>3</experiments>
</comment>
<comment type="interaction">
    <interactant intactId="EBI-11530605">
        <id>Q9H257-2</id>
    </interactant>
    <interactant intactId="EBI-1105213">
        <id>Q9UBB9</id>
        <label>TFIP11</label>
    </interactant>
    <organismsDiffer>false</organismsDiffer>
    <experiments>3</experiments>
</comment>
<comment type="interaction">
    <interactant intactId="EBI-11530605">
        <id>Q9H257-2</id>
    </interactant>
    <interactant intactId="EBI-7543499">
        <id>Q8IZW8</id>
        <label>TNS4</label>
    </interactant>
    <organismsDiffer>false</organismsDiffer>
    <experiments>3</experiments>
</comment>
<comment type="interaction">
    <interactant intactId="EBI-11530605">
        <id>Q9H257-2</id>
    </interactant>
    <interactant intactId="EBI-2820256">
        <id>Q14142</id>
        <label>TRIM14</label>
    </interactant>
    <organismsDiffer>false</organismsDiffer>
    <experiments>3</experiments>
</comment>
<comment type="interaction">
    <interactant intactId="EBI-11530605">
        <id>Q9H257-2</id>
    </interactant>
    <interactant intactId="EBI-10241197">
        <id>Q3SY00</id>
        <label>TSGA10IP</label>
    </interactant>
    <organismsDiffer>false</organismsDiffer>
    <experiments>6</experiments>
</comment>
<comment type="interaction">
    <interactant intactId="EBI-11530605">
        <id>Q9H257-2</id>
    </interactant>
    <interactant intactId="EBI-10180829">
        <id>Q7KZS0</id>
        <label>UBE2I</label>
    </interactant>
    <organismsDiffer>false</organismsDiffer>
    <experiments>3</experiments>
</comment>
<comment type="interaction">
    <interactant intactId="EBI-11530605">
        <id>Q9H257-2</id>
    </interactant>
    <interactant intactId="EBI-12817837">
        <id>Q9H9P5-5</id>
        <label>UNKL</label>
    </interactant>
    <organismsDiffer>false</organismsDiffer>
    <experiments>3</experiments>
</comment>
<comment type="interaction">
    <interactant intactId="EBI-11530605">
        <id>Q9H257-2</id>
    </interactant>
    <interactant intactId="EBI-8601749">
        <id>Q495M9</id>
        <label>USH1G</label>
    </interactant>
    <organismsDiffer>false</organismsDiffer>
    <experiments>3</experiments>
</comment>
<comment type="interaction">
    <interactant intactId="EBI-11530605">
        <id>Q9H257-2</id>
    </interactant>
    <interactant intactId="EBI-743272">
        <id>O75604</id>
        <label>USP2</label>
    </interactant>
    <organismsDiffer>false</organismsDiffer>
    <experiments>3</experiments>
</comment>
<comment type="interaction">
    <interactant intactId="EBI-11530605">
        <id>Q9H257-2</id>
    </interactant>
    <interactant intactId="EBI-18393784">
        <id>Q9H867</id>
        <label>VCPKMT</label>
    </interactant>
    <organismsDiffer>false</organismsDiffer>
    <experiments>3</experiments>
</comment>
<comment type="interaction">
    <interactant intactId="EBI-11530605">
        <id>Q9H257-2</id>
    </interactant>
    <interactant intactId="EBI-727424">
        <id>Q9UK41</id>
        <label>VPS28</label>
    </interactant>
    <organismsDiffer>false</organismsDiffer>
    <experiments>4</experiments>
</comment>
<comment type="interaction">
    <interactant intactId="EBI-11530605">
        <id>Q9H257-2</id>
    </interactant>
    <interactant intactId="EBI-515331">
        <id>P07947</id>
        <label>YES1</label>
    </interactant>
    <organismsDiffer>false</organismsDiffer>
    <experiments>3</experiments>
</comment>
<comment type="interaction">
    <interactant intactId="EBI-11530605">
        <id>Q9H257-2</id>
    </interactant>
    <interactant intactId="EBI-711925">
        <id>Q05516</id>
        <label>ZBTB16</label>
    </interactant>
    <organismsDiffer>false</organismsDiffer>
    <experiments>3</experiments>
</comment>
<comment type="interaction">
    <interactant intactId="EBI-11530605">
        <id>Q9H257-2</id>
    </interactant>
    <interactant intactId="EBI-14104088">
        <id>Q53FD0-2</id>
        <label>ZC2HC1C</label>
    </interactant>
    <organismsDiffer>false</organismsDiffer>
    <experiments>3</experiments>
</comment>
<comment type="interaction">
    <interactant intactId="EBI-11530605">
        <id>Q9H257-2</id>
    </interactant>
    <interactant intactId="EBI-10183064">
        <id>Q8N5A5-2</id>
        <label>ZGPAT</label>
    </interactant>
    <organismsDiffer>false</organismsDiffer>
    <experiments>3</experiments>
</comment>
<comment type="interaction">
    <interactant intactId="EBI-11530605">
        <id>Q9H257-2</id>
    </interactant>
    <interactant intactId="EBI-17634549">
        <id>Q9UJ78-2</id>
        <label>ZMYM5</label>
    </interactant>
    <organismsDiffer>false</organismsDiffer>
    <experiments>3</experiments>
</comment>
<comment type="interaction">
    <interactant intactId="EBI-11530605">
        <id>Q9H257-2</id>
    </interactant>
    <interactant intactId="EBI-1228269">
        <id>P58317</id>
        <label>ZNF121</label>
    </interactant>
    <organismsDiffer>false</organismsDiffer>
    <experiments>3</experiments>
</comment>
<comment type="interaction">
    <interactant intactId="EBI-11530605">
        <id>Q9H257-2</id>
    </interactant>
    <interactant intactId="EBI-12884200">
        <id>P17023</id>
        <label>ZNF19</label>
    </interactant>
    <organismsDiffer>false</organismsDiffer>
    <experiments>3</experiments>
</comment>
<comment type="interaction">
    <interactant intactId="EBI-11530605">
        <id>Q9H257-2</id>
    </interactant>
    <interactant intactId="EBI-717634">
        <id>P17024</id>
        <label>ZNF20</label>
    </interactant>
    <organismsDiffer>false</organismsDiffer>
    <experiments>3</experiments>
</comment>
<comment type="interaction">
    <interactant intactId="EBI-11530605">
        <id>Q9H257-2</id>
    </interactant>
    <interactant intactId="EBI-12357267">
        <id>Q9NZL3</id>
        <label>ZNF224</label>
    </interactant>
    <organismsDiffer>false</organismsDiffer>
    <experiments>3</experiments>
</comment>
<comment type="interaction">
    <interactant intactId="EBI-11530605">
        <id>Q9H257-2</id>
    </interactant>
    <interactant intactId="EBI-10177272">
        <id>P15622-3</id>
        <label>ZNF250</label>
    </interactant>
    <organismsDiffer>false</organismsDiffer>
    <experiments>3</experiments>
</comment>
<comment type="interaction">
    <interactant intactId="EBI-11530605">
        <id>Q9H257-2</id>
    </interactant>
    <interactant intactId="EBI-743265">
        <id>Q9BUY5</id>
        <label>ZNF426</label>
    </interactant>
    <organismsDiffer>false</organismsDiffer>
    <experiments>3</experiments>
</comment>
<comment type="interaction">
    <interactant intactId="EBI-11530605">
        <id>Q9H257-2</id>
    </interactant>
    <interactant intactId="EBI-10172590">
        <id>Q7Z3I7</id>
        <label>ZNF572</label>
    </interactant>
    <organismsDiffer>false</organismsDiffer>
    <experiments>3</experiments>
</comment>
<comment type="interaction">
    <interactant intactId="EBI-11530605">
        <id>Q9H257-2</id>
    </interactant>
    <interactant intactId="EBI-6427977">
        <id>Q96SQ5</id>
        <label>ZNF587</label>
    </interactant>
    <organismsDiffer>false</organismsDiffer>
    <experiments>3</experiments>
</comment>
<comment type="interaction">
    <interactant intactId="EBI-11530605">
        <id>Q9H257-2</id>
    </interactant>
    <interactant intactId="EBI-4395669">
        <id>Q6ZNG0</id>
        <label>ZNF620</label>
    </interactant>
    <organismsDiffer>false</organismsDiffer>
    <experiments>3</experiments>
</comment>
<comment type="interaction">
    <interactant intactId="EBI-11530605">
        <id>Q9H257-2</id>
    </interactant>
    <interactant intactId="EBI-625509">
        <id>Q8N720</id>
        <label>ZNF655</label>
    </interactant>
    <organismsDiffer>false</organismsDiffer>
    <experiments>3</experiments>
</comment>
<comment type="interaction">
    <interactant intactId="EBI-11530605">
        <id>Q9H257-2</id>
    </interactant>
    <interactant intactId="EBI-16429014">
        <id>A0A0S2Z5X4</id>
        <label>ZNF688</label>
    </interactant>
    <organismsDiffer>false</organismsDiffer>
    <experiments>3</experiments>
</comment>
<comment type="interaction">
    <interactant intactId="EBI-11530605">
        <id>Q9H257-2</id>
    </interactant>
    <interactant intactId="EBI-4395732">
        <id>P0C7X2</id>
        <label>ZNF688</label>
    </interactant>
    <organismsDiffer>false</organismsDiffer>
    <experiments>3</experiments>
</comment>
<comment type="interaction">
    <interactant intactId="EBI-11530605">
        <id>Q9H257-2</id>
    </interactant>
    <interactant intactId="EBI-10251462">
        <id>Q6NX45</id>
        <label>ZNF774</label>
    </interactant>
    <organismsDiffer>false</organismsDiffer>
    <experiments>3</experiments>
</comment>
<comment type="interaction">
    <interactant intactId="EBI-11530605">
        <id>Q9H257-2</id>
    </interactant>
    <interactant intactId="EBI-18036029">
        <id>Q3KNS6-3</id>
        <label>ZNF829</label>
    </interactant>
    <organismsDiffer>false</organismsDiffer>
    <experiments>3</experiments>
</comment>
<comment type="interaction">
    <interactant intactId="EBI-11530605">
        <id>Q9H257-2</id>
    </interactant>
    <interactant intactId="EBI-527853">
        <id>Q9UGI0</id>
        <label>ZRANB1</label>
    </interactant>
    <organismsDiffer>false</organismsDiffer>
    <experiments>3</experiments>
</comment>
<comment type="interaction">
    <interactant intactId="EBI-11530605">
        <id>Q9H257-2</id>
    </interactant>
    <interactant intactId="EBI-2795524">
        <id>Q8IYH5</id>
        <label>ZZZ3</label>
    </interactant>
    <organismsDiffer>false</organismsDiffer>
    <experiments>3</experiments>
</comment>
<comment type="interaction">
    <interactant intactId="EBI-16431743">
        <id>Q9H257-3</id>
    </interactant>
    <interactant intactId="EBI-16429430">
        <id>A0A0S2Z4M1</id>
        <label>AXIN1</label>
    </interactant>
    <organismsDiffer>false</organismsDiffer>
    <experiments>3</experiments>
</comment>
<comment type="interaction">
    <interactant intactId="EBI-16431743">
        <id>Q9H257-3</id>
    </interactant>
    <interactant intactId="EBI-727424">
        <id>Q9UK41</id>
        <label>VPS28</label>
    </interactant>
    <organismsDiffer>false</organismsDiffer>
    <experiments>3</experiments>
</comment>
<comment type="interaction">
    <interactant intactId="EBI-16431743">
        <id>Q9H257-3</id>
    </interactant>
    <interactant intactId="EBI-16429014">
        <id>A0A0S2Z5X4</id>
        <label>ZNF688</label>
    </interactant>
    <organismsDiffer>false</organismsDiffer>
    <experiments>3</experiments>
</comment>
<comment type="subcellular location">
    <subcellularLocation>
        <location evidence="6 20">Cytoplasm</location>
    </subcellularLocation>
</comment>
<comment type="alternative products">
    <event type="alternative splicing"/>
    <isoform>
        <id>Q9H257-1</id>
        <name>1</name>
        <sequence type="displayed"/>
    </isoform>
    <isoform>
        <id>Q9H257-2</id>
        <name>2</name>
        <sequence type="described" ref="VSP_024392 VSP_024393"/>
    </isoform>
    <isoform>
        <id>Q9H257-3</id>
        <name>3</name>
        <sequence type="described" ref="VSP_024390 VSP_024391"/>
    </isoform>
</comment>
<comment type="tissue specificity">
    <text evidence="6 35">Expression is restricted to several populations of phagocytes, such as macrophages, monocytes, and dendritic cells (PubMed:33548172). Highly expressed in spleen (PubMed:11053425). Also detected in liver, placenta, lung, peripheral blood leukocytes and in brain (PubMed:11053425).</text>
</comment>
<comment type="domain">
    <text evidence="32">The linker region, also named autoinhibitory interface, is required to prevent constitutive activation and maintain CARD9 in an autoinhibitory state (PubMed:31296852). Disruption of this region triggers polymerization and activation, leading to formation of BCL10-nucleating filaments (PubMed:31296852).</text>
</comment>
<comment type="PTM">
    <text evidence="1 2">Phosphorylated at Thr-231 by PRKCD downstream of C-type lectin receptors activation: phosphorylation promotes interaction with BCL10, followed by activation of NF-kappa-B and MAP kinase p38 pathways (By similarity). Phosphorylated at Thr-531 and Thr-533 by CK2 following interaction with VHL, leading to inhibit the ability to activate NF-kappa-B (By similarity).</text>
</comment>
<comment type="PTM">
    <text evidence="20 32 34">Ubiquitinated at Lys-125 via 'Lys-27'-linked ubiquitin by TRIM62 downstream of C-type lectin receptors activation; leading to CARD9 activation, followed by activation of NF-kappa-B and MAP kinase p38 pathways (PubMed:26488816, PubMed:31296852). Deubiquitinated at Lys-125 by USP15, inhibiting CARD9 (PubMed:33093067).</text>
</comment>
<comment type="disease" evidence="8 9 10 11 12 14 15 16 17 18 19 21 22 23 24 25 26 27 28 29 30 32 33 35 36">
    <disease id="DI-02578">
        <name>Immunodeficiency 103, susceptibility to fungal infections</name>
        <acronym>IMD103</acronym>
        <description>An autosomal recessive primary immunodeficiency disorder with altered immune responses and impaired clearance of fungal infections, selective against Candida. It is characterized by persistent and/or recurrent infections of the skin, nails and mucous membranes caused by organisms of the genus Candida, mainly Candida albicans.</description>
        <dbReference type="MIM" id="212050"/>
    </disease>
    <text evidence="9">The disease is caused by variants affecting the gene represented in this entry. Defects induce reduced numbers of CD4(+) Th17 lymphocytes as well as a lack of monocyte-derived cytokines in response to Candida strains (PubMed:23335372). Neutrophils show a selective Candida albicans killing defect with abnormal ultrastructural phagolysosomes and outgrowth of hyphae (PubMed:23335372).</text>
</comment>
<comment type="miscellaneous">
    <molecule>Isoform 3</molecule>
    <text evidence="41">May be produced at very low levels due to a premature stop codon in the mRNA, leading to nonsense-mediated mRNA decay.</text>
</comment>
<name>CARD9_HUMAN</name>
<protein>
    <recommendedName>
        <fullName evidence="37">Caspase recruitment domain-containing protein 9</fullName>
        <shortName evidence="37">hCARD9</shortName>
    </recommendedName>
</protein>